<evidence type="ECO:0000250" key="1"/>
<evidence type="ECO:0000250" key="2">
    <source>
        <dbReference type="UniProtKB" id="P70441"/>
    </source>
</evidence>
<evidence type="ECO:0000250" key="3">
    <source>
        <dbReference type="UniProtKB" id="Q28619"/>
    </source>
</evidence>
<evidence type="ECO:0000255" key="4">
    <source>
        <dbReference type="PROSITE-ProRule" id="PRU00143"/>
    </source>
</evidence>
<evidence type="ECO:0000256" key="5">
    <source>
        <dbReference type="SAM" id="MobiDB-lite"/>
    </source>
</evidence>
<evidence type="ECO:0000269" key="6">
    <source>
    </source>
</evidence>
<evidence type="ECO:0000269" key="7">
    <source>
    </source>
</evidence>
<evidence type="ECO:0000269" key="8">
    <source>
    </source>
</evidence>
<evidence type="ECO:0000269" key="9">
    <source>
    </source>
</evidence>
<evidence type="ECO:0000269" key="10">
    <source>
    </source>
</evidence>
<evidence type="ECO:0000269" key="11">
    <source>
    </source>
</evidence>
<evidence type="ECO:0000269" key="12">
    <source>
    </source>
</evidence>
<evidence type="ECO:0000269" key="13">
    <source>
    </source>
</evidence>
<evidence type="ECO:0000269" key="14">
    <source>
    </source>
</evidence>
<evidence type="ECO:0000269" key="15">
    <source>
    </source>
</evidence>
<evidence type="ECO:0000269" key="16">
    <source>
    </source>
</evidence>
<evidence type="ECO:0000269" key="17">
    <source>
    </source>
</evidence>
<evidence type="ECO:0000269" key="18">
    <source>
    </source>
</evidence>
<evidence type="ECO:0000269" key="19">
    <source>
    </source>
</evidence>
<evidence type="ECO:0000269" key="20">
    <source>
    </source>
</evidence>
<evidence type="ECO:0000269" key="21">
    <source>
    </source>
</evidence>
<evidence type="ECO:0000269" key="22">
    <source>
    </source>
</evidence>
<evidence type="ECO:0000269" key="23">
    <source>
    </source>
</evidence>
<evidence type="ECO:0000269" key="24">
    <source>
    </source>
</evidence>
<evidence type="ECO:0000269" key="25">
    <source>
    </source>
</evidence>
<evidence type="ECO:0000269" key="26">
    <source>
    </source>
</evidence>
<evidence type="ECO:0000269" key="27">
    <source>
    </source>
</evidence>
<evidence type="ECO:0000269" key="28">
    <source>
    </source>
</evidence>
<evidence type="ECO:0000269" key="29">
    <source>
    </source>
</evidence>
<evidence type="ECO:0000269" key="30">
    <source>
    </source>
</evidence>
<evidence type="ECO:0000269" key="31">
    <source>
    </source>
</evidence>
<evidence type="ECO:0000269" key="32">
    <source ref="8"/>
</evidence>
<evidence type="ECO:0000303" key="33">
    <source>
    </source>
</evidence>
<evidence type="ECO:0000305" key="34"/>
<evidence type="ECO:0000312" key="35">
    <source>
        <dbReference type="HGNC" id="HGNC:11075"/>
    </source>
</evidence>
<evidence type="ECO:0007744" key="36">
    <source>
    </source>
</evidence>
<evidence type="ECO:0007744" key="37">
    <source>
    </source>
</evidence>
<evidence type="ECO:0007744" key="38">
    <source>
    </source>
</evidence>
<evidence type="ECO:0007744" key="39">
    <source>
    </source>
</evidence>
<evidence type="ECO:0007744" key="40">
    <source>
    </source>
</evidence>
<evidence type="ECO:0007744" key="41">
    <source>
    </source>
</evidence>
<evidence type="ECO:0007744" key="42">
    <source>
    </source>
</evidence>
<evidence type="ECO:0007744" key="43">
    <source>
    </source>
</evidence>
<evidence type="ECO:0007744" key="44">
    <source>
    </source>
</evidence>
<evidence type="ECO:0007744" key="45">
    <source>
    </source>
</evidence>
<evidence type="ECO:0007744" key="46">
    <source>
    </source>
</evidence>
<evidence type="ECO:0007744" key="47">
    <source>
    </source>
</evidence>
<evidence type="ECO:0007829" key="48">
    <source>
        <dbReference type="PDB" id="2D10"/>
    </source>
</evidence>
<evidence type="ECO:0007829" key="49">
    <source>
        <dbReference type="PDB" id="2JXO"/>
    </source>
</evidence>
<evidence type="ECO:0007829" key="50">
    <source>
        <dbReference type="PDB" id="2KRG"/>
    </source>
</evidence>
<evidence type="ECO:0007829" key="51">
    <source>
        <dbReference type="PDB" id="2M0T"/>
    </source>
</evidence>
<evidence type="ECO:0007829" key="52">
    <source>
        <dbReference type="PDB" id="2M0V"/>
    </source>
</evidence>
<evidence type="ECO:0007829" key="53">
    <source>
        <dbReference type="PDB" id="4N6X"/>
    </source>
</evidence>
<evidence type="ECO:0007829" key="54">
    <source>
        <dbReference type="PDB" id="4PQW"/>
    </source>
</evidence>
<evidence type="ECO:0007829" key="55">
    <source>
        <dbReference type="PDB" id="4Q3H"/>
    </source>
</evidence>
<evidence type="ECO:0007829" key="56">
    <source>
        <dbReference type="PDB" id="6RQR"/>
    </source>
</evidence>
<feature type="initiator methionine" description="Removed" evidence="21 32 40 43 44 47">
    <location>
        <position position="1"/>
    </location>
</feature>
<feature type="chain" id="PRO_0000096799" description="Na(+)/H(+) exchange regulatory cofactor NHE-RF1">
    <location>
        <begin position="2"/>
        <end position="358"/>
    </location>
</feature>
<feature type="domain" description="PDZ 1" evidence="4">
    <location>
        <begin position="14"/>
        <end position="94"/>
    </location>
</feature>
<feature type="domain" description="PDZ 2" evidence="4">
    <location>
        <begin position="154"/>
        <end position="234"/>
    </location>
</feature>
<feature type="region of interest" description="Disordered" evidence="5">
    <location>
        <begin position="114"/>
        <end position="192"/>
    </location>
</feature>
<feature type="region of interest" description="Disordered" evidence="5">
    <location>
        <begin position="277"/>
        <end position="358"/>
    </location>
</feature>
<feature type="compositionally biased region" description="Low complexity" evidence="5">
    <location>
        <begin position="114"/>
        <end position="132"/>
    </location>
</feature>
<feature type="compositionally biased region" description="Basic and acidic residues" evidence="5">
    <location>
        <begin position="135"/>
        <end position="152"/>
    </location>
</feature>
<feature type="compositionally biased region" description="Polar residues" evidence="5">
    <location>
        <begin position="288"/>
        <end position="306"/>
    </location>
</feature>
<feature type="compositionally biased region" description="Low complexity" evidence="5">
    <location>
        <begin position="307"/>
        <end position="319"/>
    </location>
</feature>
<feature type="compositionally biased region" description="Basic and acidic residues" evidence="5">
    <location>
        <begin position="348"/>
        <end position="358"/>
    </location>
</feature>
<feature type="modified residue" description="N-acetylserine" evidence="32 40 43 44 47">
    <location>
        <position position="2"/>
    </location>
</feature>
<feature type="modified residue" description="Phosphoserine" evidence="45">
    <location>
        <position position="2"/>
    </location>
</feature>
<feature type="modified residue" description="Phosphoserine" evidence="41 45">
    <location>
        <position position="46"/>
    </location>
</feature>
<feature type="modified residue" description="Phosphoserine" evidence="42">
    <location>
        <position position="162"/>
    </location>
</feature>
<feature type="modified residue" description="Phosphoserine" evidence="42 46">
    <location>
        <position position="269"/>
    </location>
</feature>
<feature type="modified residue" description="Phosphoserine" evidence="36 37 38 39 41 42 45 46">
    <location>
        <position position="280"/>
    </location>
</feature>
<feature type="modified residue" description="Phosphoserine" evidence="3">
    <location>
        <position position="290"/>
    </location>
</feature>
<feature type="modified residue" description="Phosphoserine" evidence="2">
    <location>
        <position position="291"/>
    </location>
</feature>
<feature type="modified residue" description="Phosphothreonine" evidence="2">
    <location>
        <position position="293"/>
    </location>
</feature>
<feature type="modified residue" description="Phosphoserine" evidence="46">
    <location>
        <position position="294"/>
    </location>
</feature>
<feature type="modified residue" description="Phosphoserine" evidence="2">
    <location>
        <position position="299"/>
    </location>
</feature>
<feature type="modified residue" description="Phosphoserine" evidence="2">
    <location>
        <position position="302"/>
    </location>
</feature>
<feature type="splice variant" id="VSP_055497" description="In isoform 2." evidence="33">
    <location>
        <begin position="1"/>
        <end position="156"/>
    </location>
</feature>
<feature type="sequence variant" id="VAR_067661" description="In NPHLOP2; impairs the interaction with SLC34A1; causes a reduction of SLC34A1 amount on cell membrane and affects SLC34A1-dependent phosphate uptake; dbSNP:rs139622189." evidence="27">
    <original>E</original>
    <variation>A</variation>
    <location>
        <position position="68"/>
    </location>
</feature>
<feature type="sequence variant" id="VAR_034899" description="In NPHLOP2; likely benign; the mutant expressed in cultured renal cells increases the generation of cyclic AMP (cAMP) by parathyroid hormone (PTH) and inhibits phosphate transport; dbSNP:rs35910969." evidence="25">
    <original>L</original>
    <variation>V</variation>
    <location>
        <position position="110"/>
    </location>
</feature>
<feature type="sequence variant" id="VAR_048021" description="In NPHLOP2; the mutant expressed in cultured renal cells increases the generation of cAMP by PTH and inhibits phosphate transport; dbSNP:rs41282065." evidence="25">
    <original>R</original>
    <variation>Q</variation>
    <location>
        <position position="153"/>
    </location>
</feature>
<feature type="sequence variant" id="VAR_048022" description="In NPHLOP2; the mutant expressed in cultured renal cells increases the generation of cAMP by PTH and inhibits phosphate transport; dbSNP:rs119486097." evidence="25">
    <original>E</original>
    <variation>K</variation>
    <location>
        <position position="225"/>
    </location>
</feature>
<feature type="mutagenesis site" description="Loss of interaction with ACE2." evidence="28">
    <original>YGF</original>
    <variation>AGA</variation>
    <location>
        <begin position="24"/>
        <end position="26"/>
    </location>
</feature>
<feature type="mutagenesis site" description="Loss of interaction with ACE2." evidence="28">
    <original>YGF</original>
    <variation>AGA</variation>
    <location>
        <begin position="164"/>
        <end position="166"/>
    </location>
</feature>
<feature type="mutagenesis site" description="Loss of MSX binding." evidence="23">
    <original>F</original>
    <variation>R</variation>
    <location>
        <position position="355"/>
    </location>
</feature>
<feature type="mutagenesis site" description="Reduces MSX binding." evidence="23">
    <location>
        <position position="358"/>
    </location>
</feature>
<feature type="strand" evidence="53">
    <location>
        <begin position="13"/>
        <end position="18"/>
    </location>
</feature>
<feature type="strand" evidence="54">
    <location>
        <begin position="23"/>
        <end position="25"/>
    </location>
</feature>
<feature type="strand" evidence="53">
    <location>
        <begin position="27"/>
        <end position="30"/>
    </location>
</feature>
<feature type="strand" evidence="53">
    <location>
        <begin position="32"/>
        <end position="40"/>
    </location>
</feature>
<feature type="helix" evidence="53">
    <location>
        <begin position="47"/>
        <end position="50"/>
    </location>
</feature>
<feature type="strand" evidence="53">
    <location>
        <begin position="58"/>
        <end position="62"/>
    </location>
</feature>
<feature type="helix" evidence="53">
    <location>
        <begin position="72"/>
        <end position="81"/>
    </location>
</feature>
<feature type="strand" evidence="53">
    <location>
        <begin position="82"/>
        <end position="91"/>
    </location>
</feature>
<feature type="turn" evidence="53">
    <location>
        <begin position="93"/>
        <end position="95"/>
    </location>
</feature>
<feature type="turn" evidence="51">
    <location>
        <begin position="101"/>
        <end position="103"/>
    </location>
</feature>
<feature type="turn" evidence="51">
    <location>
        <begin position="106"/>
        <end position="108"/>
    </location>
</feature>
<feature type="helix" evidence="51">
    <location>
        <begin position="109"/>
        <end position="112"/>
    </location>
</feature>
<feature type="strand" evidence="51">
    <location>
        <begin position="115"/>
        <end position="118"/>
    </location>
</feature>
<feature type="strand" evidence="55">
    <location>
        <begin position="153"/>
        <end position="158"/>
    </location>
</feature>
<feature type="turn" evidence="49">
    <location>
        <begin position="160"/>
        <end position="162"/>
    </location>
</feature>
<feature type="strand" evidence="55">
    <location>
        <begin position="166"/>
        <end position="170"/>
    </location>
</feature>
<feature type="strand" evidence="55">
    <location>
        <begin position="172"/>
        <end position="182"/>
    </location>
</feature>
<feature type="strand" evidence="52">
    <location>
        <begin position="184"/>
        <end position="186"/>
    </location>
</feature>
<feature type="helix" evidence="55">
    <location>
        <begin position="187"/>
        <end position="190"/>
    </location>
</feature>
<feature type="strand" evidence="55">
    <location>
        <begin position="198"/>
        <end position="202"/>
    </location>
</feature>
<feature type="helix" evidence="55">
    <location>
        <begin position="212"/>
        <end position="221"/>
    </location>
</feature>
<feature type="turn" evidence="55">
    <location>
        <begin position="222"/>
        <end position="224"/>
    </location>
</feature>
<feature type="strand" evidence="55">
    <location>
        <begin position="225"/>
        <end position="231"/>
    </location>
</feature>
<feature type="helix" evidence="56">
    <location>
        <begin position="233"/>
        <end position="242"/>
    </location>
</feature>
<feature type="helix" evidence="56">
    <location>
        <begin position="249"/>
        <end position="252"/>
    </location>
</feature>
<feature type="helix" evidence="56">
    <location>
        <begin position="261"/>
        <end position="265"/>
    </location>
</feature>
<feature type="strand" evidence="50">
    <location>
        <begin position="286"/>
        <end position="289"/>
    </location>
</feature>
<feature type="helix" evidence="50">
    <location>
        <begin position="297"/>
        <end position="299"/>
    </location>
</feature>
<feature type="strand" evidence="50">
    <location>
        <begin position="300"/>
        <end position="302"/>
    </location>
</feature>
<feature type="strand" evidence="50">
    <location>
        <begin position="313"/>
        <end position="315"/>
    </location>
</feature>
<feature type="helix" evidence="50">
    <location>
        <begin position="323"/>
        <end position="328"/>
    </location>
</feature>
<feature type="helix" evidence="50">
    <location>
        <begin position="329"/>
        <end position="333"/>
    </location>
</feature>
<feature type="helix" evidence="48">
    <location>
        <begin position="348"/>
        <end position="355"/>
    </location>
</feature>
<sequence length="358" mass="38868">MSADAAAGAPLPRLCCLEKGPNGYGFHLHGEKGKLGQYIRLVEPGSPAEKAGLLAGDRLVEVNGENVEKETHQQVVSRIRAALNAVRLLVVDPETDEQLQKLGVQVREELLRAQEAPGQAEPPAAAEVQGAGNENEPREADKSHPEQRELRPRLCTMKKGPSGYGFNLHSDKSKPGQFIRSVDPDSPAEASGLRAQDRIVEVNGVCMEGKQHGDVVSAIRAGGDETKLLVVDRETDEFFKKCRVIPSQEHLNGPLPVPFTNGEIQKENSREALAEAALESPRPALVRSASSDTSEELNSQDSPPKQDSTAPSSTSSSDPILDFNISLAMAKERAHQKRSSKRAPQMDWSKKNELFSNL</sequence>
<proteinExistence type="evidence at protein level"/>
<reference key="1">
    <citation type="journal article" date="1997" name="J. Cell Biol.">
        <title>Identification of EBP50: a PDZ-containing phosphoprotein that associates with members of the ezrin-radixin-moesin family.</title>
        <authorList>
            <person name="Reczek D."/>
            <person name="Berryman M."/>
            <person name="Bretscher A."/>
        </authorList>
    </citation>
    <scope>NUCLEOTIDE SEQUENCE [MRNA] (ISOFORM 1)</scope>
    <scope>PROTEIN SEQUENCE OF 19-32 AND 341-350</scope>
    <scope>PHOSPHORYLATION</scope>
    <scope>SUBCELLULAR LOCATION</scope>
    <scope>TISSUE SPECIFICITY</scope>
    <scope>INTERACTION WITH EZR AND MSN</scope>
</reference>
<reference key="2">
    <citation type="journal article" date="1998" name="J. Biol. Chem.">
        <title>NHE-RF, a regulatory cofactor for Na(+)-H+ exchange, is a common interactor for merlin and ERM (MERM) proteins.</title>
        <authorList>
            <person name="Murthy A."/>
            <person name="Gonzalez-Agosti C."/>
            <person name="Cordero E."/>
            <person name="Pinney D."/>
            <person name="Candia C."/>
            <person name="Solomon F."/>
            <person name="Gusella J."/>
            <person name="Ramesh V."/>
        </authorList>
    </citation>
    <scope>NUCLEOTIDE SEQUENCE [MRNA] (ISOFORM 1)</scope>
    <scope>FUNCTION</scope>
    <scope>SUBCELLULAR LOCATION</scope>
    <scope>INTERACTION WITH EZR; RDX AND MSN</scope>
    <source>
        <tissue>Fetal brain</tissue>
    </source>
</reference>
<reference key="3">
    <citation type="journal article" date="2004" name="Nat. Genet.">
        <title>Complete sequencing and characterization of 21,243 full-length human cDNAs.</title>
        <authorList>
            <person name="Ota T."/>
            <person name="Suzuki Y."/>
            <person name="Nishikawa T."/>
            <person name="Otsuki T."/>
            <person name="Sugiyama T."/>
            <person name="Irie R."/>
            <person name="Wakamatsu A."/>
            <person name="Hayashi K."/>
            <person name="Sato H."/>
            <person name="Nagai K."/>
            <person name="Kimura K."/>
            <person name="Makita H."/>
            <person name="Sekine M."/>
            <person name="Obayashi M."/>
            <person name="Nishi T."/>
            <person name="Shibahara T."/>
            <person name="Tanaka T."/>
            <person name="Ishii S."/>
            <person name="Yamamoto J."/>
            <person name="Saito K."/>
            <person name="Kawai Y."/>
            <person name="Isono Y."/>
            <person name="Nakamura Y."/>
            <person name="Nagahari K."/>
            <person name="Murakami K."/>
            <person name="Yasuda T."/>
            <person name="Iwayanagi T."/>
            <person name="Wagatsuma M."/>
            <person name="Shiratori A."/>
            <person name="Sudo H."/>
            <person name="Hosoiri T."/>
            <person name="Kaku Y."/>
            <person name="Kodaira H."/>
            <person name="Kondo H."/>
            <person name="Sugawara M."/>
            <person name="Takahashi M."/>
            <person name="Kanda K."/>
            <person name="Yokoi T."/>
            <person name="Furuya T."/>
            <person name="Kikkawa E."/>
            <person name="Omura Y."/>
            <person name="Abe K."/>
            <person name="Kamihara K."/>
            <person name="Katsuta N."/>
            <person name="Sato K."/>
            <person name="Tanikawa M."/>
            <person name="Yamazaki M."/>
            <person name="Ninomiya K."/>
            <person name="Ishibashi T."/>
            <person name="Yamashita H."/>
            <person name="Murakawa K."/>
            <person name="Fujimori K."/>
            <person name="Tanai H."/>
            <person name="Kimata M."/>
            <person name="Watanabe M."/>
            <person name="Hiraoka S."/>
            <person name="Chiba Y."/>
            <person name="Ishida S."/>
            <person name="Ono Y."/>
            <person name="Takiguchi S."/>
            <person name="Watanabe S."/>
            <person name="Yosida M."/>
            <person name="Hotuta T."/>
            <person name="Kusano J."/>
            <person name="Kanehori K."/>
            <person name="Takahashi-Fujii A."/>
            <person name="Hara H."/>
            <person name="Tanase T.-O."/>
            <person name="Nomura Y."/>
            <person name="Togiya S."/>
            <person name="Komai F."/>
            <person name="Hara R."/>
            <person name="Takeuchi K."/>
            <person name="Arita M."/>
            <person name="Imose N."/>
            <person name="Musashino K."/>
            <person name="Yuuki H."/>
            <person name="Oshima A."/>
            <person name="Sasaki N."/>
            <person name="Aotsuka S."/>
            <person name="Yoshikawa Y."/>
            <person name="Matsunawa H."/>
            <person name="Ichihara T."/>
            <person name="Shiohata N."/>
            <person name="Sano S."/>
            <person name="Moriya S."/>
            <person name="Momiyama H."/>
            <person name="Satoh N."/>
            <person name="Takami S."/>
            <person name="Terashima Y."/>
            <person name="Suzuki O."/>
            <person name="Nakagawa S."/>
            <person name="Senoh A."/>
            <person name="Mizoguchi H."/>
            <person name="Goto Y."/>
            <person name="Shimizu F."/>
            <person name="Wakebe H."/>
            <person name="Hishigaki H."/>
            <person name="Watanabe T."/>
            <person name="Sugiyama A."/>
            <person name="Takemoto M."/>
            <person name="Kawakami B."/>
            <person name="Yamazaki M."/>
            <person name="Watanabe K."/>
            <person name="Kumagai A."/>
            <person name="Itakura S."/>
            <person name="Fukuzumi Y."/>
            <person name="Fujimori Y."/>
            <person name="Komiyama M."/>
            <person name="Tashiro H."/>
            <person name="Tanigami A."/>
            <person name="Fujiwara T."/>
            <person name="Ono T."/>
            <person name="Yamada K."/>
            <person name="Fujii Y."/>
            <person name="Ozaki K."/>
            <person name="Hirao M."/>
            <person name="Ohmori Y."/>
            <person name="Kawabata A."/>
            <person name="Hikiji T."/>
            <person name="Kobatake N."/>
            <person name="Inagaki H."/>
            <person name="Ikema Y."/>
            <person name="Okamoto S."/>
            <person name="Okitani R."/>
            <person name="Kawakami T."/>
            <person name="Noguchi S."/>
            <person name="Itoh T."/>
            <person name="Shigeta K."/>
            <person name="Senba T."/>
            <person name="Matsumura K."/>
            <person name="Nakajima Y."/>
            <person name="Mizuno T."/>
            <person name="Morinaga M."/>
            <person name="Sasaki M."/>
            <person name="Togashi T."/>
            <person name="Oyama M."/>
            <person name="Hata H."/>
            <person name="Watanabe M."/>
            <person name="Komatsu T."/>
            <person name="Mizushima-Sugano J."/>
            <person name="Satoh T."/>
            <person name="Shirai Y."/>
            <person name="Takahashi Y."/>
            <person name="Nakagawa K."/>
            <person name="Okumura K."/>
            <person name="Nagase T."/>
            <person name="Nomura N."/>
            <person name="Kikuchi H."/>
            <person name="Masuho Y."/>
            <person name="Yamashita R."/>
            <person name="Nakai K."/>
            <person name="Yada T."/>
            <person name="Nakamura Y."/>
            <person name="Ohara O."/>
            <person name="Isogai T."/>
            <person name="Sugano S."/>
        </authorList>
    </citation>
    <scope>NUCLEOTIDE SEQUENCE [LARGE SCALE MRNA] (ISOFORM 2)</scope>
    <source>
        <tissue>Liver</tissue>
    </source>
</reference>
<reference key="4">
    <citation type="journal article" date="2006" name="Nature">
        <title>DNA sequence of human chromosome 17 and analysis of rearrangement in the human lineage.</title>
        <authorList>
            <person name="Zody M.C."/>
            <person name="Garber M."/>
            <person name="Adams D.J."/>
            <person name="Sharpe T."/>
            <person name="Harrow J."/>
            <person name="Lupski J.R."/>
            <person name="Nicholson C."/>
            <person name="Searle S.M."/>
            <person name="Wilming L."/>
            <person name="Young S.K."/>
            <person name="Abouelleil A."/>
            <person name="Allen N.R."/>
            <person name="Bi W."/>
            <person name="Bloom T."/>
            <person name="Borowsky M.L."/>
            <person name="Bugalter B.E."/>
            <person name="Butler J."/>
            <person name="Chang J.L."/>
            <person name="Chen C.-K."/>
            <person name="Cook A."/>
            <person name="Corum B."/>
            <person name="Cuomo C.A."/>
            <person name="de Jong P.J."/>
            <person name="DeCaprio D."/>
            <person name="Dewar K."/>
            <person name="FitzGerald M."/>
            <person name="Gilbert J."/>
            <person name="Gibson R."/>
            <person name="Gnerre S."/>
            <person name="Goldstein S."/>
            <person name="Grafham D.V."/>
            <person name="Grocock R."/>
            <person name="Hafez N."/>
            <person name="Hagopian D.S."/>
            <person name="Hart E."/>
            <person name="Norman C.H."/>
            <person name="Humphray S."/>
            <person name="Jaffe D.B."/>
            <person name="Jones M."/>
            <person name="Kamal M."/>
            <person name="Khodiyar V.K."/>
            <person name="LaButti K."/>
            <person name="Laird G."/>
            <person name="Lehoczky J."/>
            <person name="Liu X."/>
            <person name="Lokyitsang T."/>
            <person name="Loveland J."/>
            <person name="Lui A."/>
            <person name="Macdonald P."/>
            <person name="Major J.E."/>
            <person name="Matthews L."/>
            <person name="Mauceli E."/>
            <person name="McCarroll S.A."/>
            <person name="Mihalev A.H."/>
            <person name="Mudge J."/>
            <person name="Nguyen C."/>
            <person name="Nicol R."/>
            <person name="O'Leary S.B."/>
            <person name="Osoegawa K."/>
            <person name="Schwartz D.C."/>
            <person name="Shaw-Smith C."/>
            <person name="Stankiewicz P."/>
            <person name="Steward C."/>
            <person name="Swarbreck D."/>
            <person name="Venkataraman V."/>
            <person name="Whittaker C.A."/>
            <person name="Yang X."/>
            <person name="Zimmer A.R."/>
            <person name="Bradley A."/>
            <person name="Hubbard T."/>
            <person name="Birren B.W."/>
            <person name="Rogers J."/>
            <person name="Lander E.S."/>
            <person name="Nusbaum C."/>
        </authorList>
    </citation>
    <scope>NUCLEOTIDE SEQUENCE [LARGE SCALE GENOMIC DNA]</scope>
</reference>
<reference key="5">
    <citation type="submission" date="2005-07" db="EMBL/GenBank/DDBJ databases">
        <authorList>
            <person name="Mural R.J."/>
            <person name="Istrail S."/>
            <person name="Sutton G."/>
            <person name="Florea L."/>
            <person name="Halpern A.L."/>
            <person name="Mobarry C.M."/>
            <person name="Lippert R."/>
            <person name="Walenz B."/>
            <person name="Shatkay H."/>
            <person name="Dew I."/>
            <person name="Miller J.R."/>
            <person name="Flanigan M.J."/>
            <person name="Edwards N.J."/>
            <person name="Bolanos R."/>
            <person name="Fasulo D."/>
            <person name="Halldorsson B.V."/>
            <person name="Hannenhalli S."/>
            <person name="Turner R."/>
            <person name="Yooseph S."/>
            <person name="Lu F."/>
            <person name="Nusskern D.R."/>
            <person name="Shue B.C."/>
            <person name="Zheng X.H."/>
            <person name="Zhong F."/>
            <person name="Delcher A.L."/>
            <person name="Huson D.H."/>
            <person name="Kravitz S.A."/>
            <person name="Mouchard L."/>
            <person name="Reinert K."/>
            <person name="Remington K.A."/>
            <person name="Clark A.G."/>
            <person name="Waterman M.S."/>
            <person name="Eichler E.E."/>
            <person name="Adams M.D."/>
            <person name="Hunkapiller M.W."/>
            <person name="Myers E.W."/>
            <person name="Venter J.C."/>
        </authorList>
    </citation>
    <scope>NUCLEOTIDE SEQUENCE [LARGE SCALE GENOMIC DNA]</scope>
</reference>
<reference key="6">
    <citation type="journal article" date="2004" name="Genome Res.">
        <title>The status, quality, and expansion of the NIH full-length cDNA project: the Mammalian Gene Collection (MGC).</title>
        <authorList>
            <consortium name="The MGC Project Team"/>
        </authorList>
    </citation>
    <scope>NUCLEOTIDE SEQUENCE [LARGE SCALE MRNA] (ISOFORM 1)</scope>
    <source>
        <tissue>Blood</tissue>
        <tissue>Lymph</tissue>
        <tissue>Pancreas</tissue>
        <tissue>Placenta</tissue>
    </source>
</reference>
<reference key="7">
    <citation type="journal article" date="2003" name="Nat. Biotechnol.">
        <title>Exploring proteomes and analyzing protein processing by mass spectrometric identification of sorted N-terminal peptides.</title>
        <authorList>
            <person name="Gevaert K."/>
            <person name="Goethals M."/>
            <person name="Martens L."/>
            <person name="Van Damme J."/>
            <person name="Staes A."/>
            <person name="Thomas G.R."/>
            <person name="Vandekerckhove J."/>
        </authorList>
    </citation>
    <scope>PROTEIN SEQUENCE OF 2-13</scope>
    <source>
        <tissue>Platelet</tissue>
    </source>
</reference>
<reference key="8">
    <citation type="submission" date="2006-05" db="UniProtKB">
        <authorList>
            <person name="Bienvenut W.V."/>
            <person name="Kanor S."/>
            <person name="Tissot J.-D."/>
            <person name="Quadroni M."/>
        </authorList>
    </citation>
    <scope>PROTEIN SEQUENCE OF 2-12; 39-49 AND 89-100</scope>
    <scope>CLEAVAGE OF INITIATOR METHIONINE</scope>
    <scope>ACETYLATION AT SER-2</scope>
    <scope>IDENTIFICATION BY MASS SPECTROMETRY</scope>
    <source>
        <tissue>T-cell</tissue>
    </source>
</reference>
<reference key="9">
    <citation type="journal article" date="1997" name="Proc. Natl. Acad. Sci. U.S.A.">
        <title>cAMP-mediated inhibition of the epithelial brush border Na+/H+ exchanger, NHE3, requires an associated regulatory protein.</title>
        <authorList>
            <person name="Yun C.H.C."/>
            <person name="Oh S."/>
            <person name="Zizak M."/>
            <person name="Steplock D."/>
            <person name="Tsao S."/>
            <person name="Tse C.-M."/>
            <person name="Weinman E.J."/>
            <person name="Donowitz M."/>
        </authorList>
    </citation>
    <scope>FUNCTION</scope>
    <scope>INTERACTION WITH SLC9A3</scope>
    <scope>TISSUE SPECIFICITY</scope>
</reference>
<reference key="10">
    <citation type="journal article" date="1999" name="Nature">
        <title>A kinase-regulated PDZ-domain interaction controls endocytic sorting of the beta2-adrenergic receptor.</title>
        <authorList>
            <person name="Cao T.T."/>
            <person name="Deacon H.W."/>
            <person name="Reczek D."/>
            <person name="Bretscher A."/>
            <person name="von Zastrow M."/>
        </authorList>
    </citation>
    <scope>FUNCTION</scope>
    <scope>INTERACTION WITH ADRB2</scope>
</reference>
<reference key="11">
    <citation type="journal article" date="2001" name="FEBS Lett.">
        <title>Interaction between two adapter proteins, PAG and EBP50: a possible link between membrane rafts and actin cytoskeleton.</title>
        <authorList>
            <person name="Brdickova N."/>
            <person name="Brdicka T."/>
            <person name="Andera L."/>
            <person name="Spicka J."/>
            <person name="Angelisova P."/>
            <person name="Milgram S.L."/>
            <person name="Horejsi V."/>
        </authorList>
    </citation>
    <scope>INTERACTION WITH PAG1</scope>
    <scope>SUBCELLULAR LOCATION</scope>
</reference>
<reference key="12">
    <citation type="journal article" date="2001" name="J. Cell Biol.">
        <title>Identification of EPI64, a TBC/rabGAP domain-containing microvillar protein that binds to the first PDZ domain of EBP50 and E3KARP.</title>
        <authorList>
            <person name="Reczek D."/>
            <person name="Bretscher A."/>
        </authorList>
    </citation>
    <scope>INTERACTION WITH EPI64; ARHGAP17; PLCB3 AND EZR</scope>
</reference>
<reference key="13">
    <citation type="journal article" date="2002" name="J. Biol. Chem.">
        <title>Protein kinase C epsilon-dependent regulation of cystic fibrosis transmembrane regulator involves binding to a receptor for activated C kinase (RACK1) and RACK1 binding to Na+/H+ exchange regulatory factor.</title>
        <authorList>
            <person name="Liedtke C.M."/>
            <person name="Yun C.H.C."/>
            <person name="Kyle N."/>
            <person name="Wang D."/>
        </authorList>
    </citation>
    <scope>INTERACTION WITH RACK1</scope>
</reference>
<reference key="14">
    <citation type="journal article" date="2002" name="J. Biol. Chem.">
        <title>Ezrin-radixin-moesin-binding phosphoprotein-50/Na+/H+ exchanger regulatory factor (EBP50/NHERF) blocks U50,488H-induced down-regulation of the human kappa opioid receptor by enhancing its recycling rate.</title>
        <authorList>
            <person name="Li J.-G."/>
            <person name="Chen C."/>
            <person name="Liu-Chen L.-Y."/>
        </authorList>
    </citation>
    <scope>INTERACTION WITH OPRK1</scope>
</reference>
<reference key="15">
    <citation type="journal article" date="2002" name="J. Biol. Chem.">
        <title>Epithelial inducible nitric-oxide synthase is an apical EBP50-binding protein that directs vectorial nitric oxide output.</title>
        <authorList>
            <person name="Glynne P.A."/>
            <person name="Darling K.E.A."/>
            <person name="Picot J."/>
            <person name="Evans T.J."/>
        </authorList>
    </citation>
    <scope>INTERACTION WITH NOS2</scope>
</reference>
<reference key="16">
    <citation type="journal article" date="2002" name="J. Biol. Chem.">
        <title>Regulation of GTP-binding protein alpha q (Galpha q) signaling by the ezrin-radixin-moesin-binding phosphoprotein-50 (EBP50).</title>
        <authorList>
            <person name="Rochdi M.D."/>
            <person name="Watier V."/>
            <person name="La Madeleine C."/>
            <person name="Nakata H."/>
            <person name="Kozasa T."/>
            <person name="Parent J.-L."/>
        </authorList>
    </citation>
    <scope>INTERACTION WITH GNAQ</scope>
</reference>
<reference key="17">
    <citation type="journal article" date="2002" name="J. Biol. Chem.">
        <title>The cystic fibrosis transmembrane conductance regulator interacts with and regulates the activity of the HCO3- salvage transporter human Na+-HCO3-cotransport isoform 3.</title>
        <authorList>
            <person name="Park M."/>
            <person name="Ko S.B.H."/>
            <person name="Choi J.Y."/>
            <person name="Muallem G."/>
            <person name="Thomas P.J."/>
            <person name="Pushkin A."/>
            <person name="Lee M.-S."/>
            <person name="Kim J.Y."/>
            <person name="Lee M.G."/>
            <person name="Muallem S."/>
            <person name="Kurtz I."/>
        </authorList>
    </citation>
    <scope>INTERACTION WITH SLC4A7 AND CFTR</scope>
</reference>
<reference key="18">
    <citation type="journal article" date="2002" name="J. Cell Sci.">
        <title>The PDZ-interacting domain of TRPC4 controls its localization and surface expression in HEK293 cells.</title>
        <authorList>
            <person name="Mery L."/>
            <person name="Strauss B."/>
            <person name="Dufour J.F."/>
            <person name="Krause K.H."/>
            <person name="Hoth M."/>
        </authorList>
    </citation>
    <scope>INTERACTION WITH TRPC4</scope>
</reference>
<reference key="19">
    <citation type="journal article" date="2002" name="Mol. Endocrinol.">
        <title>Estrogen receptor inducibility of the human Na+/H+ exchanger regulatory factor/ezrin-radixin-moesin binding protein 50 (NHE-RF/EBP50) gene involving multiple half-estrogen response elements.</title>
        <authorList>
            <person name="Ediger T.R."/>
            <person name="Park S.-E."/>
            <person name="Katzenellenbogen B.S."/>
        </authorList>
    </citation>
    <scope>INDUCTION BY ESTROGEN</scope>
</reference>
<reference key="20">
    <citation type="journal article" date="2003" name="Am. J. Physiol.">
        <title>The COOH termini of NBC3 and the 56-kDa H+-ATPase subunit are PDZ motifs involved in their interaction.</title>
        <authorList>
            <person name="Pushkin A."/>
            <person name="Abuladze N."/>
            <person name="Newman D."/>
            <person name="Muronets V."/>
            <person name="Sassani P."/>
            <person name="Tatishchev S."/>
            <person name="Kurtz I."/>
        </authorList>
    </citation>
    <scope>INTERACTION WITH SLC4A7 AND ATP6V1B1</scope>
</reference>
<reference key="21">
    <citation type="journal article" date="2003" name="Am. J. Physiol.">
        <title>Isoforms of SLC26A6 mediate anion transport and have functional PDZ interaction domains.</title>
        <authorList>
            <person name="Lohi H."/>
            <person name="Lamprecht G."/>
            <person name="Markovich D."/>
            <person name="Heil A."/>
            <person name="Kujala M."/>
            <person name="Seidler U."/>
            <person name="Kere J."/>
        </authorList>
    </citation>
    <scope>INTERACTION WITH SLC26A6</scope>
</reference>
<reference key="22">
    <citation type="journal article" date="2003" name="Hepatology">
        <title>EBP50, a beta-catenin-associating protein, enhances Wnt signaling and is over-expressed in hepatocellular carcinoma.</title>
        <authorList>
            <person name="Shibata T."/>
            <person name="Chuma M."/>
            <person name="Kokubu A."/>
            <person name="Sakamoto M."/>
            <person name="Hirohashi S."/>
        </authorList>
    </citation>
    <scope>INTERACTION WITH CTNNB1</scope>
</reference>
<reference key="23">
    <citation type="journal article" date="2003" name="J. Biol. Chem.">
        <title>The PDZ-binding chloride channel ClC-3B localizes to the Golgi and associates with cystic fibrosis transmembrane conductance regulator-interacting PDZ proteins.</title>
        <authorList>
            <person name="Gentzsch M."/>
            <person name="Cui L."/>
            <person name="Mengos A."/>
            <person name="Chang X.-B."/>
            <person name="Chen J.-H."/>
            <person name="Riordan J.R."/>
        </authorList>
    </citation>
    <scope>INTERACTION WITH CLCN3</scope>
</reference>
<reference key="24">
    <citation type="journal article" date="2006" name="Cell">
        <title>Global, in vivo, and site-specific phosphorylation dynamics in signaling networks.</title>
        <authorList>
            <person name="Olsen J.V."/>
            <person name="Blagoev B."/>
            <person name="Gnad F."/>
            <person name="Macek B."/>
            <person name="Kumar C."/>
            <person name="Mortensen P."/>
            <person name="Mann M."/>
        </authorList>
    </citation>
    <scope>PHOSPHORYLATION [LARGE SCALE ANALYSIS] AT SER-280</scope>
    <scope>IDENTIFICATION BY MASS SPECTROMETRY [LARGE SCALE ANALYSIS]</scope>
    <source>
        <tissue>Cervix carcinoma</tissue>
    </source>
</reference>
<reference key="25">
    <citation type="journal article" date="2007" name="J. Proteome Res.">
        <title>Improved titanium dioxide enrichment of phosphopeptides from HeLa cells and high confident phosphopeptide identification by cross-validation of MS/MS and MS/MS/MS spectra.</title>
        <authorList>
            <person name="Yu L.R."/>
            <person name="Zhu Z."/>
            <person name="Chan K.C."/>
            <person name="Issaq H.J."/>
            <person name="Dimitrov D.S."/>
            <person name="Veenstra T.D."/>
        </authorList>
    </citation>
    <scope>PHOSPHORYLATION [LARGE SCALE ANALYSIS] AT SER-280</scope>
    <scope>IDENTIFICATION BY MASS SPECTROMETRY [LARGE SCALE ANALYSIS]</scope>
    <source>
        <tissue>Cervix carcinoma</tissue>
    </source>
</reference>
<reference key="26">
    <citation type="journal article" date="2008" name="J. Proteome Res.">
        <title>Combining protein-based IMAC, peptide-based IMAC, and MudPIT for efficient phosphoproteomic analysis.</title>
        <authorList>
            <person name="Cantin G.T."/>
            <person name="Yi W."/>
            <person name="Lu B."/>
            <person name="Park S.K."/>
            <person name="Xu T."/>
            <person name="Lee J.-D."/>
            <person name="Yates J.R. III"/>
        </authorList>
    </citation>
    <scope>PHOSPHORYLATION [LARGE SCALE ANALYSIS] AT SER-280</scope>
    <scope>IDENTIFICATION BY MASS SPECTROMETRY [LARGE SCALE ANALYSIS]</scope>
    <source>
        <tissue>Cervix carcinoma</tissue>
    </source>
</reference>
<reference key="27">
    <citation type="journal article" date="2008" name="J. Proteome Res.">
        <title>Phosphorylation analysis of primary human T lymphocytes using sequential IMAC and titanium oxide enrichment.</title>
        <authorList>
            <person name="Carrascal M."/>
            <person name="Ovelleiro D."/>
            <person name="Casas V."/>
            <person name="Gay M."/>
            <person name="Abian J."/>
        </authorList>
    </citation>
    <scope>IDENTIFICATION BY MASS SPECTROMETRY [LARGE SCALE ANALYSIS]</scope>
    <source>
        <tissue>T-cell</tissue>
    </source>
</reference>
<reference key="28">
    <citation type="journal article" date="2008" name="J. Proteome Res.">
        <title>Phosphoproteome of resting human platelets.</title>
        <authorList>
            <person name="Zahedi R.P."/>
            <person name="Lewandrowski U."/>
            <person name="Wiesner J."/>
            <person name="Wortelkamp S."/>
            <person name="Moebius J."/>
            <person name="Schuetz C."/>
            <person name="Walter U."/>
            <person name="Gambaryan S."/>
            <person name="Sickmann A."/>
        </authorList>
    </citation>
    <scope>PHOSPHORYLATION [LARGE SCALE ANALYSIS] AT SER-280</scope>
    <scope>IDENTIFICATION BY MASS SPECTROMETRY [LARGE SCALE ANALYSIS]</scope>
    <source>
        <tissue>Platelet</tissue>
    </source>
</reference>
<reference key="29">
    <citation type="journal article" date="2008" name="Proc. Natl. Acad. Sci. U.S.A.">
        <title>A quantitative atlas of mitotic phosphorylation.</title>
        <authorList>
            <person name="Dephoure N."/>
            <person name="Zhou C."/>
            <person name="Villen J."/>
            <person name="Beausoleil S.A."/>
            <person name="Bakalarski C.E."/>
            <person name="Elledge S.J."/>
            <person name="Gygi S.P."/>
        </authorList>
    </citation>
    <scope>IDENTIFICATION BY MASS SPECTROMETRY [LARGE SCALE ANALYSIS]</scope>
    <source>
        <tissue>Cervix carcinoma</tissue>
    </source>
</reference>
<reference key="30">
    <citation type="journal article" date="2009" name="Anal. Chem.">
        <title>Lys-N and trypsin cover complementary parts of the phosphoproteome in a refined SCX-based approach.</title>
        <authorList>
            <person name="Gauci S."/>
            <person name="Helbig A.O."/>
            <person name="Slijper M."/>
            <person name="Krijgsveld J."/>
            <person name="Heck A.J."/>
            <person name="Mohammed S."/>
        </authorList>
    </citation>
    <scope>ACETYLATION [LARGE SCALE ANALYSIS] AT SER-2</scope>
    <scope>CLEAVAGE OF INITIATOR METHIONINE [LARGE SCALE ANALYSIS]</scope>
    <scope>IDENTIFICATION BY MASS SPECTROMETRY [LARGE SCALE ANALYSIS]</scope>
</reference>
<reference key="31">
    <citation type="journal article" date="2009" name="FEBS Lett.">
        <title>MCC, a new interacting protein for Scrib, is required for cell migration in epithelial cells.</title>
        <authorList>
            <person name="Arnaud C."/>
            <person name="Sebbagh M."/>
            <person name="Nola S."/>
            <person name="Audebert S."/>
            <person name="Bidaut G."/>
            <person name="Hermant A."/>
            <person name="Gayet O."/>
            <person name="Dusetti N.J."/>
            <person name="Ollendorff V."/>
            <person name="Santoni M.J."/>
            <person name="Borg J.P."/>
            <person name="Lecine P."/>
        </authorList>
    </citation>
    <scope>INTERACTION WITH MCC</scope>
</reference>
<reference key="32">
    <citation type="journal article" date="2009" name="Sci. Signal.">
        <title>Quantitative phosphoproteomic analysis of T cell receptor signaling reveals system-wide modulation of protein-protein interactions.</title>
        <authorList>
            <person name="Mayya V."/>
            <person name="Lundgren D.H."/>
            <person name="Hwang S.-I."/>
            <person name="Rezaul K."/>
            <person name="Wu L."/>
            <person name="Eng J.K."/>
            <person name="Rodionov V."/>
            <person name="Han D.K."/>
        </authorList>
    </citation>
    <scope>IDENTIFICATION BY MASS SPECTROMETRY [LARGE SCALE ANALYSIS]</scope>
    <source>
        <tissue>Leukemic T-cell</tissue>
    </source>
</reference>
<reference key="33">
    <citation type="journal article" date="2010" name="Sci. Signal.">
        <title>Quantitative phosphoproteomics reveals widespread full phosphorylation site occupancy during mitosis.</title>
        <authorList>
            <person name="Olsen J.V."/>
            <person name="Vermeulen M."/>
            <person name="Santamaria A."/>
            <person name="Kumar C."/>
            <person name="Miller M.L."/>
            <person name="Jensen L.J."/>
            <person name="Gnad F."/>
            <person name="Cox J."/>
            <person name="Jensen T.S."/>
            <person name="Nigg E.A."/>
            <person name="Brunak S."/>
            <person name="Mann M."/>
        </authorList>
    </citation>
    <scope>PHOSPHORYLATION [LARGE SCALE ANALYSIS] AT SER-46 AND SER-280</scope>
    <scope>IDENTIFICATION BY MASS SPECTROMETRY [LARGE SCALE ANALYSIS]</scope>
    <source>
        <tissue>Cervix carcinoma</tissue>
    </source>
</reference>
<reference key="34">
    <citation type="journal article" date="2011" name="BMC Syst. Biol.">
        <title>Initial characterization of the human central proteome.</title>
        <authorList>
            <person name="Burkard T.R."/>
            <person name="Planyavsky M."/>
            <person name="Kaupe I."/>
            <person name="Breitwieser F.P."/>
            <person name="Buerckstuemmer T."/>
            <person name="Bennett K.L."/>
            <person name="Superti-Furga G."/>
            <person name="Colinge J."/>
        </authorList>
    </citation>
    <scope>IDENTIFICATION BY MASS SPECTROMETRY [LARGE SCALE ANALYSIS]</scope>
</reference>
<reference key="35">
    <citation type="journal article" date="2011" name="Sci. Signal.">
        <title>System-wide temporal characterization of the proteome and phosphoproteome of human embryonic stem cell differentiation.</title>
        <authorList>
            <person name="Rigbolt K.T."/>
            <person name="Prokhorova T.A."/>
            <person name="Akimov V."/>
            <person name="Henningsen J."/>
            <person name="Johansen P.T."/>
            <person name="Kratchmarova I."/>
            <person name="Kassem M."/>
            <person name="Mann M."/>
            <person name="Olsen J.V."/>
            <person name="Blagoev B."/>
        </authorList>
    </citation>
    <scope>PHOSPHORYLATION [LARGE SCALE ANALYSIS] AT SER-162; SER-269 AND SER-280</scope>
    <scope>IDENTIFICATION BY MASS SPECTROMETRY [LARGE SCALE ANALYSIS]</scope>
</reference>
<reference key="36">
    <citation type="journal article" date="2012" name="Mol. Cell. Proteomics">
        <title>Comparative large-scale characterisation of plant vs. mammal proteins reveals similar and idiosyncratic N-alpha acetylation features.</title>
        <authorList>
            <person name="Bienvenut W.V."/>
            <person name="Sumpton D."/>
            <person name="Martinez A."/>
            <person name="Lilla S."/>
            <person name="Espagne C."/>
            <person name="Meinnel T."/>
            <person name="Giglione C."/>
        </authorList>
    </citation>
    <scope>ACETYLATION [LARGE SCALE ANALYSIS] AT SER-2</scope>
    <scope>CLEAVAGE OF INITIATOR METHIONINE [LARGE SCALE ANALYSIS]</scope>
    <scope>IDENTIFICATION BY MASS SPECTROMETRY [LARGE SCALE ANALYSIS]</scope>
</reference>
<reference key="37">
    <citation type="journal article" date="2012" name="PLoS ONE">
        <title>A new human NHERF1 mutation decreases renal phosphate transporter NPT2a expression by a PTH-independent mechanism.</title>
        <authorList>
            <person name="Courbebaisse M."/>
            <person name="Leroy C."/>
            <person name="Bakouh N."/>
            <person name="Salaun C."/>
            <person name="Beck L."/>
            <person name="Grandchamp B."/>
            <person name="Planelles G."/>
            <person name="Hall R.A."/>
            <person name="Friedlander G."/>
            <person name="Prie D."/>
        </authorList>
    </citation>
    <scope>INTERACTION WITH SLC34A1</scope>
    <scope>VARIANT NPHLOP2 ALA-68</scope>
    <scope>CHARACTERIZATION OF VARIANT NPHLOP2 ALA-68</scope>
</reference>
<reference key="38">
    <citation type="journal article" date="2012" name="Proc. Natl. Acad. Sci. U.S.A.">
        <title>N-terminal acetylome analyses and functional insights of the N-terminal acetyltransferase NatB.</title>
        <authorList>
            <person name="Van Damme P."/>
            <person name="Lasa M."/>
            <person name="Polevoda B."/>
            <person name="Gazquez C."/>
            <person name="Elosegui-Artola A."/>
            <person name="Kim D.S."/>
            <person name="De Juan-Pardo E."/>
            <person name="Demeyer K."/>
            <person name="Hole K."/>
            <person name="Larrea E."/>
            <person name="Timmerman E."/>
            <person name="Prieto J."/>
            <person name="Arnesen T."/>
            <person name="Sherman F."/>
            <person name="Gevaert K."/>
            <person name="Aldabe R."/>
        </authorList>
    </citation>
    <scope>ACETYLATION [LARGE SCALE ANALYSIS] AT SER-2</scope>
    <scope>CLEAVAGE OF INITIATOR METHIONINE [LARGE SCALE ANALYSIS]</scope>
    <scope>IDENTIFICATION BY MASS SPECTROMETRY [LARGE SCALE ANALYSIS]</scope>
</reference>
<reference key="39">
    <citation type="journal article" date="2013" name="J. Proteome Res.">
        <title>Toward a comprehensive characterization of a human cancer cell phosphoproteome.</title>
        <authorList>
            <person name="Zhou H."/>
            <person name="Di Palma S."/>
            <person name="Preisinger C."/>
            <person name="Peng M."/>
            <person name="Polat A.N."/>
            <person name="Heck A.J."/>
            <person name="Mohammed S."/>
        </authorList>
    </citation>
    <scope>PHOSPHORYLATION [LARGE SCALE ANALYSIS] AT SER-2; SER-46 AND SER-280</scope>
    <scope>IDENTIFICATION BY MASS SPECTROMETRY [LARGE SCALE ANALYSIS]</scope>
    <source>
        <tissue>Cervix carcinoma</tissue>
        <tissue>Erythroleukemia</tissue>
    </source>
</reference>
<reference key="40">
    <citation type="journal article" date="2014" name="J. Proteomics">
        <title>An enzyme assisted RP-RPLC approach for in-depth analysis of human liver phosphoproteome.</title>
        <authorList>
            <person name="Bian Y."/>
            <person name="Song C."/>
            <person name="Cheng K."/>
            <person name="Dong M."/>
            <person name="Wang F."/>
            <person name="Huang J."/>
            <person name="Sun D."/>
            <person name="Wang L."/>
            <person name="Ye M."/>
            <person name="Zou H."/>
        </authorList>
    </citation>
    <scope>PHOSPHORYLATION [LARGE SCALE ANALYSIS] AT SER-269; SER-280 AND SER-294</scope>
    <scope>IDENTIFICATION BY MASS SPECTROMETRY [LARGE SCALE ANALYSIS]</scope>
    <source>
        <tissue>Liver</tissue>
    </source>
</reference>
<reference key="41">
    <citation type="journal article" date="2015" name="Proteomics">
        <title>N-terminome analysis of the human mitochondrial proteome.</title>
        <authorList>
            <person name="Vaca Jacome A.S."/>
            <person name="Rabilloud T."/>
            <person name="Schaeffer-Reiss C."/>
            <person name="Rompais M."/>
            <person name="Ayoub D."/>
            <person name="Lane L."/>
            <person name="Bairoch A."/>
            <person name="Van Dorsselaer A."/>
            <person name="Carapito C."/>
        </authorList>
    </citation>
    <scope>ACETYLATION [LARGE SCALE ANALYSIS] AT SER-2</scope>
    <scope>CLEAVAGE OF INITIATOR METHIONINE [LARGE SCALE ANALYSIS]</scope>
    <scope>IDENTIFICATION BY MASS SPECTROMETRY [LARGE SCALE ANALYSIS]</scope>
</reference>
<reference key="42">
    <citation type="journal article" date="2021" name="IScience">
        <title>ACE2 interaction with cytoplasmic PDZ protein enhances SARS-CoV-2 invasion.</title>
        <authorList>
            <person name="Zhang Q."/>
            <person name="Gefter J."/>
            <person name="Sneddon W.B."/>
            <person name="Mamonova T."/>
            <person name="Friedman P.A."/>
        </authorList>
    </citation>
    <scope>INTERACTION WITH ACE2</scope>
    <scope>MUTAGENESIS OF 24-TYR--PHE-26 AND 164-TYR--PHE-166</scope>
</reference>
<reference key="43">
    <citation type="journal article" date="2001" name="J. Biol. Chem.">
        <title>Structural basis of the Na+/H+ exchanger regulatory factor PDZ1 interaction with the carboxyl-terminal region of the cystic fibrosis transmembrane conductance regulator.</title>
        <authorList>
            <person name="Karthikeyan S."/>
            <person name="Leung T."/>
            <person name="Ladias J.A.A."/>
        </authorList>
    </citation>
    <scope>X-RAY CRYSTALLOGRAPHY (1.7 ANGSTROMS) OF 11-99 IN COMPLEX WITH CFTR</scope>
</reference>
<reference key="44">
    <citation type="journal article" date="2001" name="J. Mol. Biol.">
        <title>Crystal structure of the PDZ1 domain of human Na(+)/H(+) exchanger regulatory factor provides insights into the mechanism of carboxyl-terminal leucine recognition by class I PDZ domains.</title>
        <authorList>
            <person name="Karthikeyan S."/>
            <person name="Leung T."/>
            <person name="Birrane G."/>
            <person name="Webster G."/>
            <person name="Ladias J.A.A."/>
        </authorList>
    </citation>
    <scope>X-RAY CRYSTALLOGRAPHY (1.5 ANGSTROMS) OF 11-99</scope>
    <scope>HOMODIMERIZATION</scope>
</reference>
<reference key="45">
    <citation type="journal article" date="2002" name="J. Biol. Chem.">
        <title>Structural determinants of the Na+/H+ exchanger regulatory factor interaction with the beta 2 adrenergic and platelet-derived growth factor receptors.</title>
        <authorList>
            <person name="Karthikeyan S."/>
            <person name="Leung T."/>
            <person name="Ladias J.A.A."/>
        </authorList>
    </citation>
    <scope>X-RAY CRYSTALLOGRAPHY (1.9 ANGSTROMS) OF 11-99 IN COMPLEX WITH PDGFRA; PDGFRB OR ADRB2</scope>
</reference>
<reference key="46">
    <citation type="journal article" date="2004" name="J. Cell Sci.">
        <title>The EBP50-moesin interaction involves a binding site regulated by direct masking on the FERM domain.</title>
        <authorList>
            <person name="Finnerty C.M."/>
            <person name="Chambers D."/>
            <person name="Ingraffea J."/>
            <person name="Faber H.R."/>
            <person name="Karplus P.A."/>
            <person name="Bretscher A."/>
        </authorList>
    </citation>
    <scope>X-RAY CRYSTALLOGRAPHY (3.5 ANGSTROMS) OF 321-358 IN COMPLEX WITH MSX</scope>
    <scope>MUTAGENESIS OF PHE-355 AND LEU-358</scope>
</reference>
<reference key="47">
    <citation type="journal article" date="2006" name="Structure">
        <title>Structural basis for NHERF recognition by ERM proteins.</title>
        <authorList>
            <person name="Terawaki S."/>
            <person name="Maesaki R."/>
            <person name="Hakoshima T."/>
        </authorList>
    </citation>
    <scope>X-RAY CRYSTALLOGRAPHY (2.5 ANGSTROMS) OF 331-358 IN COMPLEX WITH RDX</scope>
</reference>
<reference key="48">
    <citation type="submission" date="2007-03" db="PDB data bank">
        <title>The crystal structure of the 2nd PDZ domain of the human NHERF-1 (SLC9A3R1).</title>
        <authorList>
            <consortium name="Structural genomics consortium (SGC)"/>
        </authorList>
    </citation>
    <scope>X-RAY CRYSTALLOGRAPHY (1.5 ANGSTROMS) OF 150-236</scope>
</reference>
<reference key="49">
    <citation type="journal article" date="2008" name="N. Engl. J. Med.">
        <title>NHERF1 mutations and responsiveness of renal parathyroid hormone.</title>
        <authorList>
            <person name="Karim Z."/>
            <person name="Gerard B."/>
            <person name="Bakouh N."/>
            <person name="Alili R."/>
            <person name="Leroy C."/>
            <person name="Beck L."/>
            <person name="Silve C."/>
            <person name="Planelles G."/>
            <person name="Urena-Torres P."/>
            <person name="Grandchamp B."/>
            <person name="Friedlander G."/>
            <person name="Prie D."/>
        </authorList>
    </citation>
    <scope>FUNCTION IN RENAL PHOSPHATE ABSORPTION</scope>
    <scope>VARIANTS NPHLOP2 VAL-110; GLN-153 AND LYS-225</scope>
    <scope>CHARACTERIZATION OF VARIANTS NPHLOP2 VAL-110; GLN-153 AND LYS-225</scope>
</reference>
<organism>
    <name type="scientific">Homo sapiens</name>
    <name type="common">Human</name>
    <dbReference type="NCBI Taxonomy" id="9606"/>
    <lineage>
        <taxon>Eukaryota</taxon>
        <taxon>Metazoa</taxon>
        <taxon>Chordata</taxon>
        <taxon>Craniata</taxon>
        <taxon>Vertebrata</taxon>
        <taxon>Euteleostomi</taxon>
        <taxon>Mammalia</taxon>
        <taxon>Eutheria</taxon>
        <taxon>Euarchontoglires</taxon>
        <taxon>Primates</taxon>
        <taxon>Haplorrhini</taxon>
        <taxon>Catarrhini</taxon>
        <taxon>Hominidae</taxon>
        <taxon>Homo</taxon>
    </lineage>
</organism>
<dbReference type="EMBL" id="AF015926">
    <property type="protein sequence ID" value="AAC52084.1"/>
    <property type="molecule type" value="mRNA"/>
</dbReference>
<dbReference type="EMBL" id="AF036241">
    <property type="protein sequence ID" value="AAC04572.1"/>
    <property type="molecule type" value="mRNA"/>
</dbReference>
<dbReference type="EMBL" id="AK128474">
    <property type="protein sequence ID" value="BAG54683.1"/>
    <property type="molecule type" value="mRNA"/>
</dbReference>
<dbReference type="EMBL" id="AC016888">
    <property type="status" value="NOT_ANNOTATED_CDS"/>
    <property type="molecule type" value="Genomic_DNA"/>
</dbReference>
<dbReference type="EMBL" id="CH471099">
    <property type="protein sequence ID" value="EAW89189.1"/>
    <property type="molecule type" value="Genomic_DNA"/>
</dbReference>
<dbReference type="EMBL" id="BC001443">
    <property type="protein sequence ID" value="AAH01443.1"/>
    <property type="molecule type" value="mRNA"/>
</dbReference>
<dbReference type="EMBL" id="BC003361">
    <property type="protein sequence ID" value="AAH03361.1"/>
    <property type="molecule type" value="mRNA"/>
</dbReference>
<dbReference type="EMBL" id="BC011777">
    <property type="protein sequence ID" value="AAH11777.1"/>
    <property type="molecule type" value="mRNA"/>
</dbReference>
<dbReference type="EMBL" id="BC049220">
    <property type="protein sequence ID" value="AAH49220.1"/>
    <property type="status" value="ALT_INIT"/>
    <property type="molecule type" value="mRNA"/>
</dbReference>
<dbReference type="EMBL" id="BC053350">
    <property type="protein sequence ID" value="AAH53350.1"/>
    <property type="molecule type" value="mRNA"/>
</dbReference>
<dbReference type="CCDS" id="CCDS11705.1">
    <molecule id="O14745-1"/>
</dbReference>
<dbReference type="RefSeq" id="NP_004243.1">
    <molecule id="O14745-1"/>
    <property type="nucleotide sequence ID" value="NM_004252.5"/>
</dbReference>
<dbReference type="PDB" id="1G9O">
    <property type="method" value="X-ray"/>
    <property type="resolution" value="1.50 A"/>
    <property type="chains" value="A=11-99"/>
</dbReference>
<dbReference type="PDB" id="1GQ4">
    <property type="method" value="X-ray"/>
    <property type="resolution" value="1.90 A"/>
    <property type="chains" value="A=11-94"/>
</dbReference>
<dbReference type="PDB" id="1GQ5">
    <property type="method" value="X-ray"/>
    <property type="resolution" value="2.20 A"/>
    <property type="chains" value="A=11-94"/>
</dbReference>
<dbReference type="PDB" id="1I92">
    <property type="method" value="X-ray"/>
    <property type="resolution" value="1.70 A"/>
    <property type="chains" value="A=11-94"/>
</dbReference>
<dbReference type="PDB" id="1SGH">
    <property type="method" value="X-ray"/>
    <property type="resolution" value="3.50 A"/>
    <property type="chains" value="B=321-358"/>
</dbReference>
<dbReference type="PDB" id="2D10">
    <property type="method" value="X-ray"/>
    <property type="resolution" value="2.50 A"/>
    <property type="chains" value="E/F/G/H=331-358"/>
</dbReference>
<dbReference type="PDB" id="2JXO">
    <property type="method" value="NMR"/>
    <property type="chains" value="A=150-240"/>
</dbReference>
<dbReference type="PDB" id="2KJD">
    <property type="method" value="NMR"/>
    <property type="chains" value="A=150-270"/>
</dbReference>
<dbReference type="PDB" id="2KRG">
    <property type="method" value="NMR"/>
    <property type="chains" value="A=150-358"/>
</dbReference>
<dbReference type="PDB" id="2M0T">
    <property type="method" value="NMR"/>
    <property type="chains" value="A=11-120"/>
</dbReference>
<dbReference type="PDB" id="2M0U">
    <property type="method" value="NMR"/>
    <property type="chains" value="A=11-120"/>
</dbReference>
<dbReference type="PDB" id="2M0V">
    <property type="method" value="NMR"/>
    <property type="chains" value="A=150-270"/>
</dbReference>
<dbReference type="PDB" id="2OZF">
    <property type="method" value="X-ray"/>
    <property type="resolution" value="1.50 A"/>
    <property type="chains" value="A=150-235"/>
</dbReference>
<dbReference type="PDB" id="4JL7">
    <property type="method" value="X-ray"/>
    <property type="resolution" value="1.16 A"/>
    <property type="chains" value="A=11-95"/>
</dbReference>
<dbReference type="PDB" id="4LMM">
    <property type="method" value="X-ray"/>
    <property type="resolution" value="1.10 A"/>
    <property type="chains" value="A=11-94"/>
</dbReference>
<dbReference type="PDB" id="4MPA">
    <property type="method" value="X-ray"/>
    <property type="resolution" value="1.10 A"/>
    <property type="chains" value="A=11-94"/>
</dbReference>
<dbReference type="PDB" id="4N6X">
    <property type="method" value="X-ray"/>
    <property type="resolution" value="1.05 A"/>
    <property type="chains" value="A=11-94"/>
</dbReference>
<dbReference type="PDB" id="4PQW">
    <property type="method" value="X-ray"/>
    <property type="resolution" value="1.47 A"/>
    <property type="chains" value="A=11-94"/>
</dbReference>
<dbReference type="PDB" id="4Q3H">
    <property type="method" value="X-ray"/>
    <property type="resolution" value="1.44 A"/>
    <property type="chains" value="A/B=150-234"/>
</dbReference>
<dbReference type="PDB" id="6RQR">
    <property type="method" value="X-ray"/>
    <property type="resolution" value="2.20 A"/>
    <property type="chains" value="A/B=150-269"/>
</dbReference>
<dbReference type="PDBsum" id="1G9O"/>
<dbReference type="PDBsum" id="1GQ4"/>
<dbReference type="PDBsum" id="1GQ5"/>
<dbReference type="PDBsum" id="1I92"/>
<dbReference type="PDBsum" id="1SGH"/>
<dbReference type="PDBsum" id="2D10"/>
<dbReference type="PDBsum" id="2JXO"/>
<dbReference type="PDBsum" id="2KJD"/>
<dbReference type="PDBsum" id="2KRG"/>
<dbReference type="PDBsum" id="2M0T"/>
<dbReference type="PDBsum" id="2M0U"/>
<dbReference type="PDBsum" id="2M0V"/>
<dbReference type="PDBsum" id="2OZF"/>
<dbReference type="PDBsum" id="4JL7"/>
<dbReference type="PDBsum" id="4LMM"/>
<dbReference type="PDBsum" id="4MPA"/>
<dbReference type="PDBsum" id="4N6X"/>
<dbReference type="PDBsum" id="4PQW"/>
<dbReference type="PDBsum" id="4Q3H"/>
<dbReference type="PDBsum" id="6RQR"/>
<dbReference type="SMR" id="O14745"/>
<dbReference type="BioGRID" id="114769">
    <property type="interactions" value="185"/>
</dbReference>
<dbReference type="CORUM" id="O14745"/>
<dbReference type="DIP" id="DIP-29092N"/>
<dbReference type="ELM" id="O14745"/>
<dbReference type="FunCoup" id="O14745">
    <property type="interactions" value="668"/>
</dbReference>
<dbReference type="IntAct" id="O14745">
    <property type="interactions" value="83"/>
</dbReference>
<dbReference type="MINT" id="O14745"/>
<dbReference type="STRING" id="9606.ENSP00000262613"/>
<dbReference type="BindingDB" id="O14745"/>
<dbReference type="ChEMBL" id="CHEMBL4523125"/>
<dbReference type="TCDB" id="8.A.24.1.1">
    <property type="family name" value="the ezrin/radixin/moesin-binding phosphoprotein 50 (ebp50) family"/>
</dbReference>
<dbReference type="GlyGen" id="O14745">
    <property type="glycosylation" value="1 site, 1 O-linked glycan (1 site)"/>
</dbReference>
<dbReference type="iPTMnet" id="O14745"/>
<dbReference type="PhosphoSitePlus" id="O14745"/>
<dbReference type="SwissPalm" id="O14745"/>
<dbReference type="BioMuta" id="SLC9A3R1"/>
<dbReference type="CPTAC" id="CPTAC-588"/>
<dbReference type="CPTAC" id="CPTAC-589"/>
<dbReference type="jPOST" id="O14745"/>
<dbReference type="MassIVE" id="O14745"/>
<dbReference type="PaxDb" id="9606-ENSP00000262613"/>
<dbReference type="PeptideAtlas" id="O14745"/>
<dbReference type="ProteomicsDB" id="48202">
    <molecule id="O14745-1"/>
</dbReference>
<dbReference type="Pumba" id="O14745"/>
<dbReference type="Antibodypedia" id="1525">
    <property type="antibodies" value="349 antibodies from 36 providers"/>
</dbReference>
<dbReference type="DNASU" id="9368"/>
<dbReference type="Ensembl" id="ENST00000262613.10">
    <molecule id="O14745-1"/>
    <property type="protein sequence ID" value="ENSP00000262613.5"/>
    <property type="gene ID" value="ENSG00000109062.12"/>
</dbReference>
<dbReference type="Ensembl" id="ENST00000413388.2">
    <molecule id="O14745-2"/>
    <property type="protein sequence ID" value="ENSP00000464982.1"/>
    <property type="gene ID" value="ENSG00000109062.12"/>
</dbReference>
<dbReference type="GeneID" id="9368"/>
<dbReference type="KEGG" id="hsa:9368"/>
<dbReference type="MANE-Select" id="ENST00000262613.10">
    <property type="protein sequence ID" value="ENSP00000262613.5"/>
    <property type="RefSeq nucleotide sequence ID" value="NM_004252.5"/>
    <property type="RefSeq protein sequence ID" value="NP_004243.1"/>
</dbReference>
<dbReference type="UCSC" id="uc002jlo.5">
    <molecule id="O14745-1"/>
    <property type="organism name" value="human"/>
</dbReference>
<dbReference type="AGR" id="HGNC:11075"/>
<dbReference type="CTD" id="9368"/>
<dbReference type="DisGeNET" id="9368"/>
<dbReference type="GeneCards" id="NHERF1"/>
<dbReference type="HGNC" id="HGNC:11075">
    <property type="gene designation" value="NHERF1"/>
</dbReference>
<dbReference type="HPA" id="ENSG00000109062">
    <property type="expression patterns" value="Tissue enhanced (esophagus)"/>
</dbReference>
<dbReference type="MalaCards" id="NHERF1"/>
<dbReference type="MIM" id="604990">
    <property type="type" value="gene"/>
</dbReference>
<dbReference type="MIM" id="612287">
    <property type="type" value="phenotype"/>
</dbReference>
<dbReference type="neXtProt" id="NX_O14745"/>
<dbReference type="OpenTargets" id="ENSG00000109062"/>
<dbReference type="Orphanet" id="244305">
    <property type="disease" value="Dominant hypophosphatemia with nephrolithiasis or osteoporosis"/>
</dbReference>
<dbReference type="PharmGKB" id="PA35931"/>
<dbReference type="VEuPathDB" id="HostDB:ENSG00000109062"/>
<dbReference type="eggNOG" id="KOG3528">
    <property type="taxonomic scope" value="Eukaryota"/>
</dbReference>
<dbReference type="GeneTree" id="ENSGT00950000182849"/>
<dbReference type="HOGENOM" id="CLU_038627_1_0_1"/>
<dbReference type="InParanoid" id="O14745"/>
<dbReference type="OMA" id="KHNMKCL"/>
<dbReference type="OrthoDB" id="10007415at2759"/>
<dbReference type="PAN-GO" id="O14745">
    <property type="GO annotations" value="4 GO annotations based on evolutionary models"/>
</dbReference>
<dbReference type="PhylomeDB" id="O14745"/>
<dbReference type="TreeFam" id="TF350449"/>
<dbReference type="PathwayCommons" id="O14745"/>
<dbReference type="SignaLink" id="O14745"/>
<dbReference type="SIGNOR" id="O14745"/>
<dbReference type="BioGRID-ORCS" id="9368">
    <property type="hits" value="14 hits in 1166 CRISPR screens"/>
</dbReference>
<dbReference type="ChiTaRS" id="SLC9A3R1">
    <property type="organism name" value="human"/>
</dbReference>
<dbReference type="EvolutionaryTrace" id="O14745"/>
<dbReference type="GeneWiki" id="Sodium-hydrogen_antiporter_3_regulator_1"/>
<dbReference type="GenomeRNAi" id="9368"/>
<dbReference type="Pharos" id="O14745">
    <property type="development level" value="Tchem"/>
</dbReference>
<dbReference type="PRO" id="PR:O14745"/>
<dbReference type="Proteomes" id="UP000005640">
    <property type="component" value="Chromosome 17"/>
</dbReference>
<dbReference type="RNAct" id="O14745">
    <property type="molecule type" value="protein"/>
</dbReference>
<dbReference type="Bgee" id="ENSG00000109062">
    <property type="expression patterns" value="Expressed in granulocyte and 195 other cell types or tissues"/>
</dbReference>
<dbReference type="ExpressionAtlas" id="O14745">
    <property type="expression patterns" value="baseline and differential"/>
</dbReference>
<dbReference type="GO" id="GO:0015629">
    <property type="term" value="C:actin cytoskeleton"/>
    <property type="evidence" value="ECO:0000304"/>
    <property type="project" value="ProtInc"/>
</dbReference>
<dbReference type="GO" id="GO:0016324">
    <property type="term" value="C:apical plasma membrane"/>
    <property type="evidence" value="ECO:0000314"/>
    <property type="project" value="UniProtKB"/>
</dbReference>
<dbReference type="GO" id="GO:0031526">
    <property type="term" value="C:brush border membrane"/>
    <property type="evidence" value="ECO:0007669"/>
    <property type="project" value="Ensembl"/>
</dbReference>
<dbReference type="GO" id="GO:0071944">
    <property type="term" value="C:cell periphery"/>
    <property type="evidence" value="ECO:0000314"/>
    <property type="project" value="UniProtKB"/>
</dbReference>
<dbReference type="GO" id="GO:0005737">
    <property type="term" value="C:cytoplasm"/>
    <property type="evidence" value="ECO:0000314"/>
    <property type="project" value="UniProtKB"/>
</dbReference>
<dbReference type="GO" id="GO:0012505">
    <property type="term" value="C:endomembrane system"/>
    <property type="evidence" value="ECO:0007669"/>
    <property type="project" value="UniProtKB-SubCell"/>
</dbReference>
<dbReference type="GO" id="GO:0070062">
    <property type="term" value="C:extracellular exosome"/>
    <property type="evidence" value="ECO:0007005"/>
    <property type="project" value="UniProtKB"/>
</dbReference>
<dbReference type="GO" id="GO:0030175">
    <property type="term" value="C:filopodium"/>
    <property type="evidence" value="ECO:0007669"/>
    <property type="project" value="UniProtKB-SubCell"/>
</dbReference>
<dbReference type="GO" id="GO:0016020">
    <property type="term" value="C:membrane"/>
    <property type="evidence" value="ECO:0000314"/>
    <property type="project" value="UniProtKB"/>
</dbReference>
<dbReference type="GO" id="GO:0005902">
    <property type="term" value="C:microvillus"/>
    <property type="evidence" value="ECO:0000314"/>
    <property type="project" value="UniProtKB"/>
</dbReference>
<dbReference type="GO" id="GO:0031528">
    <property type="term" value="C:microvillus membrane"/>
    <property type="evidence" value="ECO:0000250"/>
    <property type="project" value="UniProtKB"/>
</dbReference>
<dbReference type="GO" id="GO:0048471">
    <property type="term" value="C:perinuclear region of cytoplasm"/>
    <property type="evidence" value="ECO:0000314"/>
    <property type="project" value="UniProtKB"/>
</dbReference>
<dbReference type="GO" id="GO:0098797">
    <property type="term" value="C:plasma membrane protein complex"/>
    <property type="evidence" value="ECO:0000250"/>
    <property type="project" value="ARUK-UCL"/>
</dbReference>
<dbReference type="GO" id="GO:0001726">
    <property type="term" value="C:ruffle"/>
    <property type="evidence" value="ECO:0007669"/>
    <property type="project" value="UniProtKB-SubCell"/>
</dbReference>
<dbReference type="GO" id="GO:0097225">
    <property type="term" value="C:sperm midpiece"/>
    <property type="evidence" value="ECO:0000250"/>
    <property type="project" value="UniProtKB"/>
</dbReference>
<dbReference type="GO" id="GO:0032426">
    <property type="term" value="C:stereocilium tip"/>
    <property type="evidence" value="ECO:0007669"/>
    <property type="project" value="Ensembl"/>
</dbReference>
<dbReference type="GO" id="GO:0031982">
    <property type="term" value="C:vesicle"/>
    <property type="evidence" value="ECO:0007005"/>
    <property type="project" value="UniProtKB"/>
</dbReference>
<dbReference type="GO" id="GO:0031698">
    <property type="term" value="F:beta-2 adrenergic receptor binding"/>
    <property type="evidence" value="ECO:0000353"/>
    <property type="project" value="UniProtKB"/>
</dbReference>
<dbReference type="GO" id="GO:0008013">
    <property type="term" value="F:beta-catenin binding"/>
    <property type="evidence" value="ECO:0000353"/>
    <property type="project" value="UniProtKB"/>
</dbReference>
<dbReference type="GO" id="GO:0099103">
    <property type="term" value="F:channel activator activity"/>
    <property type="evidence" value="ECO:0000314"/>
    <property type="project" value="UniProtKB"/>
</dbReference>
<dbReference type="GO" id="GO:0017081">
    <property type="term" value="F:chloride channel regulator activity"/>
    <property type="evidence" value="ECO:0000314"/>
    <property type="project" value="UniProtKB"/>
</dbReference>
<dbReference type="GO" id="GO:0050780">
    <property type="term" value="F:dopamine receptor binding"/>
    <property type="evidence" value="ECO:0007669"/>
    <property type="project" value="Ensembl"/>
</dbReference>
<dbReference type="GO" id="GO:0070851">
    <property type="term" value="F:growth factor receptor binding"/>
    <property type="evidence" value="ECO:0000353"/>
    <property type="project" value="UniProtKB"/>
</dbReference>
<dbReference type="GO" id="GO:0042802">
    <property type="term" value="F:identical protein binding"/>
    <property type="evidence" value="ECO:0000353"/>
    <property type="project" value="IntAct"/>
</dbReference>
<dbReference type="GO" id="GO:0030165">
    <property type="term" value="F:PDZ domain binding"/>
    <property type="evidence" value="ECO:0000353"/>
    <property type="project" value="UniProtKB"/>
</dbReference>
<dbReference type="GO" id="GO:0019902">
    <property type="term" value="F:phosphatase binding"/>
    <property type="evidence" value="ECO:0000353"/>
    <property type="project" value="UniProtKB"/>
</dbReference>
<dbReference type="GO" id="GO:0043495">
    <property type="term" value="F:protein-membrane adaptor activity"/>
    <property type="evidence" value="ECO:0000318"/>
    <property type="project" value="GO_Central"/>
</dbReference>
<dbReference type="GO" id="GO:0005102">
    <property type="term" value="F:signaling receptor binding"/>
    <property type="evidence" value="ECO:0000353"/>
    <property type="project" value="UniProtKB"/>
</dbReference>
<dbReference type="GO" id="GO:0031799">
    <property type="term" value="F:type 2 metabotropic glutamate receptor binding"/>
    <property type="evidence" value="ECO:0000353"/>
    <property type="project" value="ARUK-UCL"/>
</dbReference>
<dbReference type="GO" id="GO:0031800">
    <property type="term" value="F:type 3 metabotropic glutamate receptor binding"/>
    <property type="evidence" value="ECO:0000353"/>
    <property type="project" value="ARUK-UCL"/>
</dbReference>
<dbReference type="GO" id="GO:0030036">
    <property type="term" value="P:actin cytoskeleton organization"/>
    <property type="evidence" value="ECO:0007669"/>
    <property type="project" value="Ensembl"/>
</dbReference>
<dbReference type="GO" id="GO:0007191">
    <property type="term" value="P:adenylate cyclase-activating dopamine receptor signaling pathway"/>
    <property type="evidence" value="ECO:0007669"/>
    <property type="project" value="Ensembl"/>
</dbReference>
<dbReference type="GO" id="GO:0060088">
    <property type="term" value="P:auditory receptor cell stereocilium organization"/>
    <property type="evidence" value="ECO:0007669"/>
    <property type="project" value="Ensembl"/>
</dbReference>
<dbReference type="GO" id="GO:0032782">
    <property type="term" value="P:bile acid secretion"/>
    <property type="evidence" value="ECO:0000250"/>
    <property type="project" value="UniProtKB"/>
</dbReference>
<dbReference type="GO" id="GO:0090660">
    <property type="term" value="P:cerebrospinal fluid circulation"/>
    <property type="evidence" value="ECO:0000250"/>
    <property type="project" value="ARUK-UCL"/>
</dbReference>
<dbReference type="GO" id="GO:0044782">
    <property type="term" value="P:cilium organization"/>
    <property type="evidence" value="ECO:0000250"/>
    <property type="project" value="ARUK-UCL"/>
</dbReference>
<dbReference type="GO" id="GO:0045198">
    <property type="term" value="P:establishment of epithelial cell apical/basal polarity"/>
    <property type="evidence" value="ECO:0000315"/>
    <property type="project" value="UniProtKB"/>
</dbReference>
<dbReference type="GO" id="GO:0051683">
    <property type="term" value="P:establishment of Golgi localization"/>
    <property type="evidence" value="ECO:0000315"/>
    <property type="project" value="UniProtKB"/>
</dbReference>
<dbReference type="GO" id="GO:0010761">
    <property type="term" value="P:fibroblast migration"/>
    <property type="evidence" value="ECO:0007669"/>
    <property type="project" value="Ensembl"/>
</dbReference>
<dbReference type="GO" id="GO:0051939">
    <property type="term" value="P:gamma-aminobutyric acid import"/>
    <property type="evidence" value="ECO:0000250"/>
    <property type="project" value="ARUK-UCL"/>
</dbReference>
<dbReference type="GO" id="GO:0022612">
    <property type="term" value="P:gland morphogenesis"/>
    <property type="evidence" value="ECO:0000315"/>
    <property type="project" value="UniProtKB"/>
</dbReference>
<dbReference type="GO" id="GO:0034635">
    <property type="term" value="P:glutathione transport"/>
    <property type="evidence" value="ECO:0000250"/>
    <property type="project" value="UniProtKB"/>
</dbReference>
<dbReference type="GO" id="GO:0098739">
    <property type="term" value="P:import across plasma membrane"/>
    <property type="evidence" value="ECO:0000250"/>
    <property type="project" value="ARUK-UCL"/>
</dbReference>
<dbReference type="GO" id="GO:0030643">
    <property type="term" value="P:intracellular phosphate ion homeostasis"/>
    <property type="evidence" value="ECO:0007669"/>
    <property type="project" value="Ensembl"/>
</dbReference>
<dbReference type="GO" id="GO:0045199">
    <property type="term" value="P:maintenance of epithelial cell apical/basal polarity"/>
    <property type="evidence" value="ECO:0000315"/>
    <property type="project" value="ARUK-UCL"/>
</dbReference>
<dbReference type="GO" id="GO:0030033">
    <property type="term" value="P:microvillus assembly"/>
    <property type="evidence" value="ECO:0000315"/>
    <property type="project" value="UniProtKB"/>
</dbReference>
<dbReference type="GO" id="GO:0002009">
    <property type="term" value="P:morphogenesis of an epithelium"/>
    <property type="evidence" value="ECO:0000303"/>
    <property type="project" value="ARUK-UCL"/>
</dbReference>
<dbReference type="GO" id="GO:0090090">
    <property type="term" value="P:negative regulation of canonical Wnt signaling pathway"/>
    <property type="evidence" value="ECO:0000315"/>
    <property type="project" value="UniProtKB"/>
</dbReference>
<dbReference type="GO" id="GO:0008285">
    <property type="term" value="P:negative regulation of cell population proliferation"/>
    <property type="evidence" value="ECO:0000314"/>
    <property type="project" value="UniProtKB"/>
</dbReference>
<dbReference type="GO" id="GO:0070373">
    <property type="term" value="P:negative regulation of ERK1 and ERK2 cascade"/>
    <property type="evidence" value="ECO:0000314"/>
    <property type="project" value="UniProtKB"/>
</dbReference>
<dbReference type="GO" id="GO:0010764">
    <property type="term" value="P:negative regulation of fibroblast migration"/>
    <property type="evidence" value="ECO:0007669"/>
    <property type="project" value="Ensembl"/>
</dbReference>
<dbReference type="GO" id="GO:0045930">
    <property type="term" value="P:negative regulation of mitotic cell cycle"/>
    <property type="evidence" value="ECO:0000315"/>
    <property type="project" value="UniProtKB"/>
</dbReference>
<dbReference type="GO" id="GO:0051898">
    <property type="term" value="P:negative regulation of phosphatidylinositol 3-kinase/protein kinase B signal transduction"/>
    <property type="evidence" value="ECO:0000315"/>
    <property type="project" value="UniProtKB"/>
</dbReference>
<dbReference type="GO" id="GO:0010642">
    <property type="term" value="P:negative regulation of platelet-derived growth factor receptor signaling pathway"/>
    <property type="evidence" value="ECO:0000250"/>
    <property type="project" value="UniProtKB"/>
</dbReference>
<dbReference type="GO" id="GO:0010766">
    <property type="term" value="P:negative regulation of sodium ion transport"/>
    <property type="evidence" value="ECO:0007669"/>
    <property type="project" value="Ensembl"/>
</dbReference>
<dbReference type="GO" id="GO:0007097">
    <property type="term" value="P:nuclear migration"/>
    <property type="evidence" value="ECO:0000315"/>
    <property type="project" value="UniProtKB"/>
</dbReference>
<dbReference type="GO" id="GO:0060158">
    <property type="term" value="P:phospholipase C-activating dopamine receptor signaling pathway"/>
    <property type="evidence" value="ECO:0007669"/>
    <property type="project" value="Ensembl"/>
</dbReference>
<dbReference type="GO" id="GO:0007009">
    <property type="term" value="P:plasma membrane organization"/>
    <property type="evidence" value="ECO:0000250"/>
    <property type="project" value="ARUK-UCL"/>
</dbReference>
<dbReference type="GO" id="GO:2001244">
    <property type="term" value="P:positive regulation of intrinsic apoptotic signaling pathway"/>
    <property type="evidence" value="ECO:0000314"/>
    <property type="project" value="UniProtKB"/>
</dbReference>
<dbReference type="GO" id="GO:0072659">
    <property type="term" value="P:protein localization to plasma membrane"/>
    <property type="evidence" value="ECO:0000315"/>
    <property type="project" value="UniProtKB"/>
</dbReference>
<dbReference type="GO" id="GO:0065003">
    <property type="term" value="P:protein-containing complex assembly"/>
    <property type="evidence" value="ECO:0000304"/>
    <property type="project" value="ProtInc"/>
</dbReference>
<dbReference type="GO" id="GO:0008360">
    <property type="term" value="P:regulation of cell shape"/>
    <property type="evidence" value="ECO:0000315"/>
    <property type="project" value="UniProtKB"/>
</dbReference>
<dbReference type="GO" id="GO:0008361">
    <property type="term" value="P:regulation of cell size"/>
    <property type="evidence" value="ECO:0000315"/>
    <property type="project" value="UniProtKB"/>
</dbReference>
<dbReference type="GO" id="GO:0045859">
    <property type="term" value="P:regulation of protein kinase activity"/>
    <property type="evidence" value="ECO:0000250"/>
    <property type="project" value="UniProtKB"/>
</dbReference>
<dbReference type="GO" id="GO:1903402">
    <property type="term" value="P:regulation of renal phosphate excretion"/>
    <property type="evidence" value="ECO:0007669"/>
    <property type="project" value="Ensembl"/>
</dbReference>
<dbReference type="GO" id="GO:0070293">
    <property type="term" value="P:renal absorption"/>
    <property type="evidence" value="ECO:0000250"/>
    <property type="project" value="UniProtKB"/>
</dbReference>
<dbReference type="GO" id="GO:0097291">
    <property type="term" value="P:renal phosphate ion absorption"/>
    <property type="evidence" value="ECO:0000315"/>
    <property type="project" value="UniProtKB"/>
</dbReference>
<dbReference type="GO" id="GO:0003096">
    <property type="term" value="P:renal sodium ion transport"/>
    <property type="evidence" value="ECO:0007669"/>
    <property type="project" value="Ensembl"/>
</dbReference>
<dbReference type="GO" id="GO:0007605">
    <property type="term" value="P:sensory perception of sound"/>
    <property type="evidence" value="ECO:0007669"/>
    <property type="project" value="Ensembl"/>
</dbReference>
<dbReference type="GO" id="GO:0150104">
    <property type="term" value="P:transport across blood-brain barrier"/>
    <property type="evidence" value="ECO:0000303"/>
    <property type="project" value="ARUK-UCL"/>
</dbReference>
<dbReference type="GO" id="GO:0016055">
    <property type="term" value="P:Wnt signaling pathway"/>
    <property type="evidence" value="ECO:0007669"/>
    <property type="project" value="UniProtKB-KW"/>
</dbReference>
<dbReference type="CDD" id="cd06768">
    <property type="entry name" value="PDZ_NHERF-like"/>
    <property type="match status" value="2"/>
</dbReference>
<dbReference type="DisProt" id="DP02000"/>
<dbReference type="FunFam" id="2.30.42.10:FF:000068">
    <property type="entry name" value="Na(+)/H(+) exchange regulatory cofactor NHE-RF"/>
    <property type="match status" value="2"/>
</dbReference>
<dbReference type="Gene3D" id="2.30.42.10">
    <property type="match status" value="2"/>
</dbReference>
<dbReference type="IDEAL" id="IID00134"/>
<dbReference type="InterPro" id="IPR015098">
    <property type="entry name" value="EBP50_C"/>
</dbReference>
<dbReference type="InterPro" id="IPR051067">
    <property type="entry name" value="NHER"/>
</dbReference>
<dbReference type="InterPro" id="IPR017300">
    <property type="entry name" value="NHERF-1/NHERF-2"/>
</dbReference>
<dbReference type="InterPro" id="IPR001478">
    <property type="entry name" value="PDZ"/>
</dbReference>
<dbReference type="InterPro" id="IPR036034">
    <property type="entry name" value="PDZ_sf"/>
</dbReference>
<dbReference type="PANTHER" id="PTHR14191:SF7">
    <property type="entry name" value="NA(+)_H(+) EXCHANGE REGULATORY COFACTOR NHE-RF1"/>
    <property type="match status" value="1"/>
</dbReference>
<dbReference type="PANTHER" id="PTHR14191">
    <property type="entry name" value="PDZ DOMAIN CONTAINING PROTEIN"/>
    <property type="match status" value="1"/>
</dbReference>
<dbReference type="Pfam" id="PF09007">
    <property type="entry name" value="EBP50_C"/>
    <property type="match status" value="1"/>
</dbReference>
<dbReference type="Pfam" id="PF00595">
    <property type="entry name" value="PDZ"/>
    <property type="match status" value="2"/>
</dbReference>
<dbReference type="PIRSF" id="PIRSF037866">
    <property type="entry name" value="EBP50"/>
    <property type="match status" value="1"/>
</dbReference>
<dbReference type="SMART" id="SM00228">
    <property type="entry name" value="PDZ"/>
    <property type="match status" value="2"/>
</dbReference>
<dbReference type="SUPFAM" id="SSF50156">
    <property type="entry name" value="PDZ domain-like"/>
    <property type="match status" value="2"/>
</dbReference>
<dbReference type="PROSITE" id="PS50106">
    <property type="entry name" value="PDZ"/>
    <property type="match status" value="2"/>
</dbReference>
<accession>O14745</accession>
<accession>B3KY21</accession>
<accession>O43552</accession>
<accession>Q86WQ5</accession>
<comment type="function">
    <text evidence="1 6 25 29 31">Scaffold protein that connects plasma membrane proteins with members of the ezrin/moesin/radixin family and thereby helps to link them to the actin cytoskeleton and to regulate their surface expression. Necessary for recycling of internalized ADRB2. Was first known to play a role in the regulation of the activity and subcellular location of SLC9A3. Necessary for cAMP-mediated phosphorylation and inhibition of SLC9A3. May enhance Wnt signaling. May participate in HTR4 targeting to microvilli (By similarity). Involved in the regulation of phosphate reabsorption in the renal proximal tubules. Involved in sperm capacitation. May participate in the regulation of the chloride and bicarbonate homeostasis in spermatozoa.</text>
</comment>
<comment type="subunit">
    <text evidence="2 6 7 8 9 10 11 12 13 15 16 17 18 19 20 22 23 24 26 27 28 29 30 31">Homodimer, and heterodimer with NHERF2. Binds the N-termini of EZR, RDX and MSN. Binds the C-termini of PDGFRA, PDGFRB, ADRB2, NOS2 and CFTR. Binds ARHGAP17, EPI64, RACK1, OPRK1, GNAQ, CTNNB1 and PLCB3. Binds PDZK1 (By similarity). Interacts with CLCN3. Binds the C-terminus of PAG1. In resting T-cells, part of a PAG1-NHERF1-MSN complex which is disrupted upon TCR activation. Forms a complex with CFTR and SLC4A7. Forms a complex with SLC4A7 and ATP6V1B1. Interacts with TRPC4 (via the PDZ-binding domain). Directly interacts with HTR4 (By similarity). Interacts (via the PDZ 1 domain) with PODXL (via the C-terminal PDZ-binding motif DTHL); interaction is not detected in glomerular epithelium cells. Interacts (via the PDZ 1 domain) with PODXL (via the C-terminal PDZ-binding motif DTHL); the interaction take place early in the secretory pathway and is necessary for its apical membrane sorting (By similarity). Interacts with SLC26A3 (By similarity). Interacts with MCC. Interacts with SLC34A1. Interacts (via the PDZ domains) with SLC26A6 isoform 4 and isoform 5. Interacts (via PDZ domains) with ACE2 (via PDZ-binding motif); the interaction may enhance ACE2 membrane residence (PubMed:34189428).</text>
</comment>
<comment type="interaction">
    <interactant intactId="EBI-349787">
        <id>O14745</id>
    </interactant>
    <interactant intactId="EBI-7730807">
        <id>Q9BYF1</id>
        <label>ACE2</label>
    </interactant>
    <organismsDiffer>false</organismsDiffer>
    <experiments>7</experiments>
</comment>
<comment type="interaction">
    <interactant intactId="EBI-349787">
        <id>O14745</id>
    </interactant>
    <interactant intactId="EBI-491169">
        <id>P07550</id>
        <label>ADRB2</label>
    </interactant>
    <organismsDiffer>false</organismsDiffer>
    <experiments>6</experiments>
</comment>
<comment type="interaction">
    <interactant intactId="EBI-349787">
        <id>O14745</id>
    </interactant>
    <interactant intactId="EBI-743771">
        <id>Q92624</id>
        <label>APPBP2</label>
    </interactant>
    <organismsDiffer>false</organismsDiffer>
    <experiments>3</experiments>
</comment>
<comment type="interaction">
    <interactant intactId="EBI-349787">
        <id>O14745</id>
    </interactant>
    <interactant intactId="EBI-349854">
        <id>P13569</id>
        <label>CFTR</label>
    </interactant>
    <organismsDiffer>false</organismsDiffer>
    <experiments>26</experiments>
</comment>
<comment type="interaction">
    <interactant intactId="EBI-349787">
        <id>O14745</id>
    </interactant>
    <interactant intactId="EBI-725950">
        <id>P29762</id>
        <label>CRABP1</label>
    </interactant>
    <organismsDiffer>false</organismsDiffer>
    <experiments>3</experiments>
</comment>
<comment type="interaction">
    <interactant intactId="EBI-349787">
        <id>O14745</id>
    </interactant>
    <interactant intactId="EBI-12000556">
        <id>Q9Y2H0-1</id>
        <label>DLGAP4</label>
    </interactant>
    <organismsDiffer>false</organismsDiffer>
    <experiments>3</experiments>
</comment>
<comment type="interaction">
    <interactant intactId="EBI-349787">
        <id>O14745</id>
    </interactant>
    <interactant intactId="EBI-1056902">
        <id>P15311</id>
        <label>EZR</label>
    </interactant>
    <organismsDiffer>false</organismsDiffer>
    <experiments>6</experiments>
</comment>
<comment type="interaction">
    <interactant intactId="EBI-349787">
        <id>O14745</id>
    </interactant>
    <interactant intactId="EBI-528768">
        <id>P26038</id>
        <label>MSN</label>
    </interactant>
    <organismsDiffer>false</organismsDiffer>
    <experiments>4</experiments>
</comment>
<comment type="interaction">
    <interactant intactId="EBI-349787">
        <id>O14745</id>
    </interactant>
    <interactant intactId="EBI-1014500">
        <id>P35240-1</id>
        <label>NF2</label>
    </interactant>
    <organismsDiffer>false</organismsDiffer>
    <experiments>4</experiments>
</comment>
<comment type="interaction">
    <interactant intactId="EBI-349787">
        <id>O14745</id>
    </interactant>
    <interactant intactId="EBI-349787">
        <id>O14745</id>
        <label>NHERF1</label>
    </interactant>
    <organismsDiffer>false</organismsDiffer>
    <experiments>2</experiments>
</comment>
<comment type="interaction">
    <interactant intactId="EBI-349787">
        <id>O14745</id>
    </interactant>
    <interactant intactId="EBI-8677223">
        <id>P47900</id>
        <label>P2RY1</label>
    </interactant>
    <organismsDiffer>false</organismsDiffer>
    <experiments>2</experiments>
</comment>
<comment type="interaction">
    <interactant intactId="EBI-349787">
        <id>O14745</id>
    </interactant>
    <interactant intactId="EBI-641237">
        <id>P09619</id>
        <label>PDGFRB</label>
    </interactant>
    <organismsDiffer>false</organismsDiffer>
    <experiments>5</experiments>
</comment>
<comment type="interaction">
    <interactant intactId="EBI-349787">
        <id>O14745</id>
    </interactant>
    <interactant intactId="EBI-2511516">
        <id>O60346</id>
        <label>PHLPP1</label>
    </interactant>
    <organismsDiffer>false</organismsDiffer>
    <experiments>2</experiments>
</comment>
<comment type="interaction">
    <interactant intactId="EBI-349787">
        <id>O14745</id>
    </interactant>
    <interactant intactId="EBI-11165225">
        <id>O60346-2</id>
        <label>PHLPP1</label>
    </interactant>
    <organismsDiffer>false</organismsDiffer>
    <experiments>5</experiments>
</comment>
<comment type="interaction">
    <interactant intactId="EBI-349787">
        <id>O14745</id>
    </interactant>
    <interactant intactId="EBI-2511496">
        <id>Q6ZVD8</id>
        <label>PHLPP2</label>
    </interactant>
    <organismsDiffer>false</organismsDiffer>
    <experiments>6</experiments>
</comment>
<comment type="interaction">
    <interactant intactId="EBI-349787">
        <id>O14745</id>
    </interactant>
    <interactant intactId="EBI-696162">
        <id>P60484</id>
        <label>PTEN</label>
    </interactant>
    <organismsDiffer>false</organismsDiffer>
    <experiments>7</experiments>
</comment>
<comment type="interaction">
    <interactant intactId="EBI-349787">
        <id>O14745</id>
    </interactant>
    <interactant intactId="EBI-7815040">
        <id>Q9BXI6</id>
        <label>TBC1D10A</label>
    </interactant>
    <organismsDiffer>false</organismsDiffer>
    <experiments>2</experiments>
</comment>
<comment type="interaction">
    <interactant intactId="EBI-349787">
        <id>O14745</id>
    </interactant>
    <interactant intactId="EBI-8505383">
        <id>Q9R0W0</id>
        <label>mGluR1a</label>
    </interactant>
    <organismsDiffer>true</organismsDiffer>
    <experiments>2</experiments>
</comment>
<comment type="interaction">
    <interactant intactId="EBI-349787">
        <id>O14745</id>
    </interactant>
    <interactant intactId="EBI-647737">
        <id>P26043</id>
        <label>Rdx</label>
    </interactant>
    <organismsDiffer>true</organismsDiffer>
    <experiments>2</experiments>
</comment>
<comment type="subcellular location">
    <subcellularLocation>
        <location evidence="1">Cytoplasm</location>
    </subcellularLocation>
    <subcellularLocation>
        <location evidence="1">Apical cell membrane</location>
    </subcellularLocation>
    <subcellularLocation>
        <location>Endomembrane system</location>
        <topology>Peripheral membrane protein</topology>
    </subcellularLocation>
    <subcellularLocation>
        <location>Cell projection</location>
        <location>Filopodium</location>
    </subcellularLocation>
    <subcellularLocation>
        <location>Cell projection</location>
        <location>Ruffle</location>
    </subcellularLocation>
    <subcellularLocation>
        <location>Cell projection</location>
        <location>Microvillus</location>
    </subcellularLocation>
    <text evidence="1">Translocates from the cytoplasm to the apical cell membrane in a PODXL-dependent manner. Colocalizes with CFTR at the midpiece of sperm tail (By similarity). Colocalizes with actin in microvilli-rich apical regions of the syncytiotrophoblast. Found in microvilli, ruffling membrane and filopodia of HeLa cells. Present in lipid rafts of T-cells.</text>
</comment>
<comment type="alternative products">
    <event type="alternative splicing"/>
    <isoform>
        <id>O14745-1</id>
        <name>1</name>
        <sequence type="displayed"/>
    </isoform>
    <isoform>
        <id>O14745-2</id>
        <name>2</name>
        <sequence type="described" ref="VSP_055497"/>
    </isoform>
</comment>
<comment type="tissue specificity">
    <text evidence="29 30">Detected in liver, kidney, pancreas, prostate, spleen, small intestine and placenta, in particular in the syncytiotrophoblast.</text>
</comment>
<comment type="induction">
    <text evidence="14">By estrogen.</text>
</comment>
<comment type="PTM">
    <text evidence="30">Phosphorylated on serine residues.</text>
</comment>
<comment type="disease" evidence="25 27">
    <disease id="DI-01798">
        <name>Nephrolithiasis/osteoporosis, hypophosphatemic, 2</name>
        <acronym>NPHLOP2</acronym>
        <description>A disease characterized by decreased renal phosphate absorption, renal phosphate wasting, hypophosphatemia, hyperphosphaturia, hypercalciuria, nephrolithiasis and osteoporosis.</description>
        <dbReference type="MIM" id="612287"/>
    </disease>
    <text>The disease is caused by variants affecting the gene represented in this entry.</text>
</comment>
<comment type="sequence caution" evidence="34">
    <conflict type="erroneous initiation">
        <sequence resource="EMBL-CDS" id="AAH49220"/>
    </conflict>
    <text>Extended N-terminus.</text>
</comment>
<comment type="online information" name="Atlas of Genetics and Cytogenetics in Oncology and Haematology">
    <link uri="https://atlasgeneticsoncology.org/gene/46023/SLC9A3R1"/>
</comment>
<keyword id="KW-0002">3D-structure</keyword>
<keyword id="KW-0007">Acetylation</keyword>
<keyword id="KW-0025">Alternative splicing</keyword>
<keyword id="KW-1003">Cell membrane</keyword>
<keyword id="KW-0966">Cell projection</keyword>
<keyword id="KW-0963">Cytoplasm</keyword>
<keyword id="KW-0903">Direct protein sequencing</keyword>
<keyword id="KW-0225">Disease variant</keyword>
<keyword id="KW-0472">Membrane</keyword>
<keyword id="KW-1285">Osteoporosis</keyword>
<keyword id="KW-0597">Phosphoprotein</keyword>
<keyword id="KW-1267">Proteomics identification</keyword>
<keyword id="KW-1185">Reference proteome</keyword>
<keyword id="KW-0677">Repeat</keyword>
<keyword id="KW-0879">Wnt signaling pathway</keyword>
<gene>
    <name evidence="35" type="primary">NHERF1</name>
    <name type="synonym">NHERF</name>
    <name type="synonym">SLC9A3R1</name>
</gene>
<name>NHRF1_HUMAN</name>
<protein>
    <recommendedName>
        <fullName evidence="34">Na(+)/H(+) exchange regulatory cofactor NHE-RF1</fullName>
        <shortName>NHERF-1</shortName>
    </recommendedName>
    <alternativeName>
        <fullName>Ezrin-radixin-moesin-binding phosphoprotein 50</fullName>
        <shortName>EBP50</shortName>
    </alternativeName>
    <alternativeName>
        <fullName>Regulatory cofactor of Na(+)/H(+) exchanger</fullName>
    </alternativeName>
    <alternativeName>
        <fullName>Sodium-hydrogen exchanger regulatory factor 1</fullName>
    </alternativeName>
    <alternativeName>
        <fullName>Solute carrier family 9 isoform A3 regulatory factor 1</fullName>
    </alternativeName>
</protein>